<dbReference type="EC" id="2.4.-.-" evidence="12"/>
<dbReference type="EC" id="2.4.2.-" evidence="12"/>
<dbReference type="EC" id="2.4.1.-" evidence="12 16 17"/>
<dbReference type="EMBL" id="AJ007583">
    <property type="protein sequence ID" value="CAA07571.1"/>
    <property type="molecule type" value="mRNA"/>
</dbReference>
<dbReference type="EMBL" id="AB011181">
    <property type="protein sequence ID" value="BAA25535.3"/>
    <property type="status" value="ALT_INIT"/>
    <property type="molecule type" value="mRNA"/>
</dbReference>
<dbReference type="EMBL" id="CR456510">
    <property type="protein sequence ID" value="CAG30396.1"/>
    <property type="molecule type" value="mRNA"/>
</dbReference>
<dbReference type="EMBL" id="AL008630">
    <property type="protein sequence ID" value="CAI17950.1"/>
    <property type="molecule type" value="Genomic_DNA"/>
</dbReference>
<dbReference type="EMBL" id="AL008715">
    <property type="protein sequence ID" value="CAI17950.1"/>
    <property type="status" value="JOINED"/>
    <property type="molecule type" value="Genomic_DNA"/>
</dbReference>
<dbReference type="EMBL" id="AL096754">
    <property type="protein sequence ID" value="CAI17950.1"/>
    <property type="status" value="JOINED"/>
    <property type="molecule type" value="Genomic_DNA"/>
</dbReference>
<dbReference type="EMBL" id="Z68287">
    <property type="protein sequence ID" value="CAI17950.1"/>
    <property type="status" value="JOINED"/>
    <property type="molecule type" value="Genomic_DNA"/>
</dbReference>
<dbReference type="EMBL" id="Z69042">
    <property type="protein sequence ID" value="CAI17950.1"/>
    <property type="status" value="JOINED"/>
    <property type="molecule type" value="Genomic_DNA"/>
</dbReference>
<dbReference type="EMBL" id="Z69943">
    <property type="protein sequence ID" value="CAI17950.1"/>
    <property type="status" value="JOINED"/>
    <property type="molecule type" value="Genomic_DNA"/>
</dbReference>
<dbReference type="EMBL" id="Z70288">
    <property type="protein sequence ID" value="CAI17950.1"/>
    <property type="status" value="JOINED"/>
    <property type="molecule type" value="Genomic_DNA"/>
</dbReference>
<dbReference type="EMBL" id="Z82173">
    <property type="protein sequence ID" value="CAI17950.1"/>
    <property type="status" value="JOINED"/>
    <property type="molecule type" value="Genomic_DNA"/>
</dbReference>
<dbReference type="EMBL" id="AL008715">
    <property type="protein sequence ID" value="CAI17890.1"/>
    <property type="molecule type" value="Genomic_DNA"/>
</dbReference>
<dbReference type="EMBL" id="AL008630">
    <property type="protein sequence ID" value="CAI17890.1"/>
    <property type="status" value="JOINED"/>
    <property type="molecule type" value="Genomic_DNA"/>
</dbReference>
<dbReference type="EMBL" id="AL096754">
    <property type="protein sequence ID" value="CAI17890.1"/>
    <property type="status" value="JOINED"/>
    <property type="molecule type" value="Genomic_DNA"/>
</dbReference>
<dbReference type="EMBL" id="Z68287">
    <property type="protein sequence ID" value="CAI17890.1"/>
    <property type="status" value="JOINED"/>
    <property type="molecule type" value="Genomic_DNA"/>
</dbReference>
<dbReference type="EMBL" id="Z69042">
    <property type="protein sequence ID" value="CAI17890.1"/>
    <property type="status" value="JOINED"/>
    <property type="molecule type" value="Genomic_DNA"/>
</dbReference>
<dbReference type="EMBL" id="Z69943">
    <property type="protein sequence ID" value="CAI17890.1"/>
    <property type="status" value="JOINED"/>
    <property type="molecule type" value="Genomic_DNA"/>
</dbReference>
<dbReference type="EMBL" id="Z70288">
    <property type="protein sequence ID" value="CAI17890.1"/>
    <property type="status" value="JOINED"/>
    <property type="molecule type" value="Genomic_DNA"/>
</dbReference>
<dbReference type="EMBL" id="Z82173">
    <property type="protein sequence ID" value="CAI17890.1"/>
    <property type="status" value="JOINED"/>
    <property type="molecule type" value="Genomic_DNA"/>
</dbReference>
<dbReference type="EMBL" id="AL096754">
    <property type="protein sequence ID" value="CAI18784.1"/>
    <property type="molecule type" value="Genomic_DNA"/>
</dbReference>
<dbReference type="EMBL" id="AL008630">
    <property type="protein sequence ID" value="CAI18784.1"/>
    <property type="status" value="JOINED"/>
    <property type="molecule type" value="Genomic_DNA"/>
</dbReference>
<dbReference type="EMBL" id="AL008715">
    <property type="protein sequence ID" value="CAI18784.1"/>
    <property type="status" value="JOINED"/>
    <property type="molecule type" value="Genomic_DNA"/>
</dbReference>
<dbReference type="EMBL" id="Z68287">
    <property type="protein sequence ID" value="CAI18784.1"/>
    <property type="status" value="JOINED"/>
    <property type="molecule type" value="Genomic_DNA"/>
</dbReference>
<dbReference type="EMBL" id="Z69042">
    <property type="protein sequence ID" value="CAI18784.1"/>
    <property type="status" value="JOINED"/>
    <property type="molecule type" value="Genomic_DNA"/>
</dbReference>
<dbReference type="EMBL" id="Z69943">
    <property type="protein sequence ID" value="CAI18784.1"/>
    <property type="status" value="JOINED"/>
    <property type="molecule type" value="Genomic_DNA"/>
</dbReference>
<dbReference type="EMBL" id="Z70288">
    <property type="protein sequence ID" value="CAI18784.1"/>
    <property type="status" value="JOINED"/>
    <property type="molecule type" value="Genomic_DNA"/>
</dbReference>
<dbReference type="EMBL" id="Z82173">
    <property type="protein sequence ID" value="CAI18784.1"/>
    <property type="status" value="JOINED"/>
    <property type="molecule type" value="Genomic_DNA"/>
</dbReference>
<dbReference type="EMBL" id="Z68287">
    <property type="protein sequence ID" value="CAI18785.1"/>
    <property type="molecule type" value="Genomic_DNA"/>
</dbReference>
<dbReference type="EMBL" id="AL008630">
    <property type="protein sequence ID" value="CAI18785.1"/>
    <property type="status" value="JOINED"/>
    <property type="molecule type" value="Genomic_DNA"/>
</dbReference>
<dbReference type="EMBL" id="AL008715">
    <property type="protein sequence ID" value="CAI18785.1"/>
    <property type="status" value="JOINED"/>
    <property type="molecule type" value="Genomic_DNA"/>
</dbReference>
<dbReference type="EMBL" id="AL096754">
    <property type="protein sequence ID" value="CAI18785.1"/>
    <property type="status" value="JOINED"/>
    <property type="molecule type" value="Genomic_DNA"/>
</dbReference>
<dbReference type="EMBL" id="Z69042">
    <property type="protein sequence ID" value="CAI18785.1"/>
    <property type="status" value="JOINED"/>
    <property type="molecule type" value="Genomic_DNA"/>
</dbReference>
<dbReference type="EMBL" id="Z69943">
    <property type="protein sequence ID" value="CAI18785.1"/>
    <property type="status" value="JOINED"/>
    <property type="molecule type" value="Genomic_DNA"/>
</dbReference>
<dbReference type="EMBL" id="Z70288">
    <property type="protein sequence ID" value="CAI18785.1"/>
    <property type="status" value="JOINED"/>
    <property type="molecule type" value="Genomic_DNA"/>
</dbReference>
<dbReference type="EMBL" id="Z82173">
    <property type="protein sequence ID" value="CAI18785.1"/>
    <property type="status" value="JOINED"/>
    <property type="molecule type" value="Genomic_DNA"/>
</dbReference>
<dbReference type="EMBL" id="Z69042">
    <property type="protein sequence ID" value="CAI18772.1"/>
    <property type="molecule type" value="Genomic_DNA"/>
</dbReference>
<dbReference type="EMBL" id="AL008630">
    <property type="protein sequence ID" value="CAI18772.1"/>
    <property type="status" value="JOINED"/>
    <property type="molecule type" value="Genomic_DNA"/>
</dbReference>
<dbReference type="EMBL" id="AL008715">
    <property type="protein sequence ID" value="CAI18772.1"/>
    <property type="status" value="JOINED"/>
    <property type="molecule type" value="Genomic_DNA"/>
</dbReference>
<dbReference type="EMBL" id="AL096754">
    <property type="protein sequence ID" value="CAI18772.1"/>
    <property type="status" value="JOINED"/>
    <property type="molecule type" value="Genomic_DNA"/>
</dbReference>
<dbReference type="EMBL" id="Z68287">
    <property type="protein sequence ID" value="CAI18772.1"/>
    <property type="status" value="JOINED"/>
    <property type="molecule type" value="Genomic_DNA"/>
</dbReference>
<dbReference type="EMBL" id="Z69943">
    <property type="protein sequence ID" value="CAI18772.1"/>
    <property type="status" value="JOINED"/>
    <property type="molecule type" value="Genomic_DNA"/>
</dbReference>
<dbReference type="EMBL" id="Z70288">
    <property type="protein sequence ID" value="CAI18772.1"/>
    <property type="status" value="JOINED"/>
    <property type="molecule type" value="Genomic_DNA"/>
</dbReference>
<dbReference type="EMBL" id="Z82173">
    <property type="protein sequence ID" value="CAI18772.1"/>
    <property type="status" value="JOINED"/>
    <property type="molecule type" value="Genomic_DNA"/>
</dbReference>
<dbReference type="EMBL" id="Z69943">
    <property type="protein sequence ID" value="CAI18788.1"/>
    <property type="molecule type" value="Genomic_DNA"/>
</dbReference>
<dbReference type="EMBL" id="AL008630">
    <property type="protein sequence ID" value="CAI18788.1"/>
    <property type="status" value="JOINED"/>
    <property type="molecule type" value="Genomic_DNA"/>
</dbReference>
<dbReference type="EMBL" id="AL008715">
    <property type="protein sequence ID" value="CAI18788.1"/>
    <property type="status" value="JOINED"/>
    <property type="molecule type" value="Genomic_DNA"/>
</dbReference>
<dbReference type="EMBL" id="AL096754">
    <property type="protein sequence ID" value="CAI18788.1"/>
    <property type="status" value="JOINED"/>
    <property type="molecule type" value="Genomic_DNA"/>
</dbReference>
<dbReference type="EMBL" id="Z68287">
    <property type="protein sequence ID" value="CAI18788.1"/>
    <property type="status" value="JOINED"/>
    <property type="molecule type" value="Genomic_DNA"/>
</dbReference>
<dbReference type="EMBL" id="Z69042">
    <property type="protein sequence ID" value="CAI18788.1"/>
    <property type="status" value="JOINED"/>
    <property type="molecule type" value="Genomic_DNA"/>
</dbReference>
<dbReference type="EMBL" id="Z70288">
    <property type="protein sequence ID" value="CAI18788.1"/>
    <property type="status" value="JOINED"/>
    <property type="molecule type" value="Genomic_DNA"/>
</dbReference>
<dbReference type="EMBL" id="Z82173">
    <property type="protein sequence ID" value="CAI18788.1"/>
    <property type="status" value="JOINED"/>
    <property type="molecule type" value="Genomic_DNA"/>
</dbReference>
<dbReference type="EMBL" id="Z70288">
    <property type="protein sequence ID" value="CAI18769.1"/>
    <property type="molecule type" value="Genomic_DNA"/>
</dbReference>
<dbReference type="EMBL" id="AL008630">
    <property type="protein sequence ID" value="CAI18769.1"/>
    <property type="status" value="JOINED"/>
    <property type="molecule type" value="Genomic_DNA"/>
</dbReference>
<dbReference type="EMBL" id="AL008715">
    <property type="protein sequence ID" value="CAI18769.1"/>
    <property type="status" value="JOINED"/>
    <property type="molecule type" value="Genomic_DNA"/>
</dbReference>
<dbReference type="EMBL" id="AL096754">
    <property type="protein sequence ID" value="CAI18769.1"/>
    <property type="status" value="JOINED"/>
    <property type="molecule type" value="Genomic_DNA"/>
</dbReference>
<dbReference type="EMBL" id="Z68287">
    <property type="protein sequence ID" value="CAI18769.1"/>
    <property type="status" value="JOINED"/>
    <property type="molecule type" value="Genomic_DNA"/>
</dbReference>
<dbReference type="EMBL" id="Z69042">
    <property type="protein sequence ID" value="CAI18769.1"/>
    <property type="status" value="JOINED"/>
    <property type="molecule type" value="Genomic_DNA"/>
</dbReference>
<dbReference type="EMBL" id="Z69943">
    <property type="protein sequence ID" value="CAI18769.1"/>
    <property type="status" value="JOINED"/>
    <property type="molecule type" value="Genomic_DNA"/>
</dbReference>
<dbReference type="EMBL" id="Z82173">
    <property type="protein sequence ID" value="CAI18769.1"/>
    <property type="status" value="JOINED"/>
    <property type="molecule type" value="Genomic_DNA"/>
</dbReference>
<dbReference type="EMBL" id="Z82173">
    <property type="protein sequence ID" value="CAI18754.1"/>
    <property type="molecule type" value="Genomic_DNA"/>
</dbReference>
<dbReference type="EMBL" id="AL008630">
    <property type="protein sequence ID" value="CAI18754.1"/>
    <property type="status" value="JOINED"/>
    <property type="molecule type" value="Genomic_DNA"/>
</dbReference>
<dbReference type="EMBL" id="AL008715">
    <property type="protein sequence ID" value="CAI18754.1"/>
    <property type="status" value="JOINED"/>
    <property type="molecule type" value="Genomic_DNA"/>
</dbReference>
<dbReference type="EMBL" id="AL096754">
    <property type="protein sequence ID" value="CAI18754.1"/>
    <property type="status" value="JOINED"/>
    <property type="molecule type" value="Genomic_DNA"/>
</dbReference>
<dbReference type="EMBL" id="Z68287">
    <property type="protein sequence ID" value="CAI18754.1"/>
    <property type="status" value="JOINED"/>
    <property type="molecule type" value="Genomic_DNA"/>
</dbReference>
<dbReference type="EMBL" id="Z69042">
    <property type="protein sequence ID" value="CAI18754.1"/>
    <property type="status" value="JOINED"/>
    <property type="molecule type" value="Genomic_DNA"/>
</dbReference>
<dbReference type="EMBL" id="Z69943">
    <property type="protein sequence ID" value="CAI18754.1"/>
    <property type="status" value="JOINED"/>
    <property type="molecule type" value="Genomic_DNA"/>
</dbReference>
<dbReference type="EMBL" id="Z70288">
    <property type="protein sequence ID" value="CAI18754.1"/>
    <property type="status" value="JOINED"/>
    <property type="molecule type" value="Genomic_DNA"/>
</dbReference>
<dbReference type="EMBL" id="Z69943">
    <property type="protein sequence ID" value="CAQ06856.1"/>
    <property type="molecule type" value="Genomic_DNA"/>
</dbReference>
<dbReference type="EMBL" id="AL008630">
    <property type="protein sequence ID" value="CAQ06856.1"/>
    <property type="status" value="JOINED"/>
    <property type="molecule type" value="Genomic_DNA"/>
</dbReference>
<dbReference type="EMBL" id="AL008715">
    <property type="protein sequence ID" value="CAQ06856.1"/>
    <property type="status" value="JOINED"/>
    <property type="molecule type" value="Genomic_DNA"/>
</dbReference>
<dbReference type="EMBL" id="AL096754">
    <property type="protein sequence ID" value="CAQ06856.1"/>
    <property type="status" value="JOINED"/>
    <property type="molecule type" value="Genomic_DNA"/>
</dbReference>
<dbReference type="EMBL" id="Z68287">
    <property type="protein sequence ID" value="CAQ06856.1"/>
    <property type="status" value="JOINED"/>
    <property type="molecule type" value="Genomic_DNA"/>
</dbReference>
<dbReference type="EMBL" id="Z69042">
    <property type="protein sequence ID" value="CAQ06856.1"/>
    <property type="status" value="JOINED"/>
    <property type="molecule type" value="Genomic_DNA"/>
</dbReference>
<dbReference type="EMBL" id="Z70288">
    <property type="protein sequence ID" value="CAQ06856.1"/>
    <property type="status" value="JOINED"/>
    <property type="molecule type" value="Genomic_DNA"/>
</dbReference>
<dbReference type="EMBL" id="Z82173">
    <property type="protein sequence ID" value="CAQ06856.1"/>
    <property type="status" value="JOINED"/>
    <property type="molecule type" value="Genomic_DNA"/>
</dbReference>
<dbReference type="EMBL" id="AL096754">
    <property type="protein sequence ID" value="CAQ08281.1"/>
    <property type="molecule type" value="Genomic_DNA"/>
</dbReference>
<dbReference type="EMBL" id="AL008630">
    <property type="protein sequence ID" value="CAQ08281.1"/>
    <property type="status" value="JOINED"/>
    <property type="molecule type" value="Genomic_DNA"/>
</dbReference>
<dbReference type="EMBL" id="AL008715">
    <property type="protein sequence ID" value="CAQ08281.1"/>
    <property type="status" value="JOINED"/>
    <property type="molecule type" value="Genomic_DNA"/>
</dbReference>
<dbReference type="EMBL" id="Z68287">
    <property type="protein sequence ID" value="CAQ08281.1"/>
    <property type="status" value="JOINED"/>
    <property type="molecule type" value="Genomic_DNA"/>
</dbReference>
<dbReference type="EMBL" id="Z69042">
    <property type="protein sequence ID" value="CAQ08281.1"/>
    <property type="status" value="JOINED"/>
    <property type="molecule type" value="Genomic_DNA"/>
</dbReference>
<dbReference type="EMBL" id="Z69943">
    <property type="protein sequence ID" value="CAQ08281.1"/>
    <property type="status" value="JOINED"/>
    <property type="molecule type" value="Genomic_DNA"/>
</dbReference>
<dbReference type="EMBL" id="Z70288">
    <property type="protein sequence ID" value="CAQ08281.1"/>
    <property type="status" value="JOINED"/>
    <property type="molecule type" value="Genomic_DNA"/>
</dbReference>
<dbReference type="EMBL" id="Z82173">
    <property type="protein sequence ID" value="CAQ08281.1"/>
    <property type="status" value="JOINED"/>
    <property type="molecule type" value="Genomic_DNA"/>
</dbReference>
<dbReference type="EMBL" id="Z68287">
    <property type="protein sequence ID" value="CAQ08801.1"/>
    <property type="molecule type" value="Genomic_DNA"/>
</dbReference>
<dbReference type="EMBL" id="AL008630">
    <property type="protein sequence ID" value="CAQ08801.1"/>
    <property type="status" value="JOINED"/>
    <property type="molecule type" value="Genomic_DNA"/>
</dbReference>
<dbReference type="EMBL" id="AL008715">
    <property type="protein sequence ID" value="CAQ08801.1"/>
    <property type="status" value="JOINED"/>
    <property type="molecule type" value="Genomic_DNA"/>
</dbReference>
<dbReference type="EMBL" id="AL096754">
    <property type="protein sequence ID" value="CAQ08801.1"/>
    <property type="status" value="JOINED"/>
    <property type="molecule type" value="Genomic_DNA"/>
</dbReference>
<dbReference type="EMBL" id="Z69042">
    <property type="protein sequence ID" value="CAQ08801.1"/>
    <property type="status" value="JOINED"/>
    <property type="molecule type" value="Genomic_DNA"/>
</dbReference>
<dbReference type="EMBL" id="Z69943">
    <property type="protein sequence ID" value="CAQ08801.1"/>
    <property type="status" value="JOINED"/>
    <property type="molecule type" value="Genomic_DNA"/>
</dbReference>
<dbReference type="EMBL" id="Z70288">
    <property type="protein sequence ID" value="CAQ08801.1"/>
    <property type="status" value="JOINED"/>
    <property type="molecule type" value="Genomic_DNA"/>
</dbReference>
<dbReference type="EMBL" id="Z82173">
    <property type="protein sequence ID" value="CAQ08801.1"/>
    <property type="status" value="JOINED"/>
    <property type="molecule type" value="Genomic_DNA"/>
</dbReference>
<dbReference type="EMBL" id="AL008630">
    <property type="protein sequence ID" value="CAQ09323.1"/>
    <property type="molecule type" value="Genomic_DNA"/>
</dbReference>
<dbReference type="EMBL" id="AL008715">
    <property type="protein sequence ID" value="CAQ09323.1"/>
    <property type="status" value="JOINED"/>
    <property type="molecule type" value="Genomic_DNA"/>
</dbReference>
<dbReference type="EMBL" id="AL096754">
    <property type="protein sequence ID" value="CAQ09323.1"/>
    <property type="status" value="JOINED"/>
    <property type="molecule type" value="Genomic_DNA"/>
</dbReference>
<dbReference type="EMBL" id="Z68287">
    <property type="protein sequence ID" value="CAQ09323.1"/>
    <property type="status" value="JOINED"/>
    <property type="molecule type" value="Genomic_DNA"/>
</dbReference>
<dbReference type="EMBL" id="Z69042">
    <property type="protein sequence ID" value="CAQ09323.1"/>
    <property type="status" value="JOINED"/>
    <property type="molecule type" value="Genomic_DNA"/>
</dbReference>
<dbReference type="EMBL" id="Z69943">
    <property type="protein sequence ID" value="CAQ09323.1"/>
    <property type="status" value="JOINED"/>
    <property type="molecule type" value="Genomic_DNA"/>
</dbReference>
<dbReference type="EMBL" id="Z70288">
    <property type="protein sequence ID" value="CAQ09323.1"/>
    <property type="status" value="JOINED"/>
    <property type="molecule type" value="Genomic_DNA"/>
</dbReference>
<dbReference type="EMBL" id="Z82173">
    <property type="protein sequence ID" value="CAQ09323.1"/>
    <property type="status" value="JOINED"/>
    <property type="molecule type" value="Genomic_DNA"/>
</dbReference>
<dbReference type="EMBL" id="AL008715">
    <property type="protein sequence ID" value="CAQ09434.1"/>
    <property type="molecule type" value="Genomic_DNA"/>
</dbReference>
<dbReference type="EMBL" id="AL008630">
    <property type="protein sequence ID" value="CAQ09434.1"/>
    <property type="status" value="JOINED"/>
    <property type="molecule type" value="Genomic_DNA"/>
</dbReference>
<dbReference type="EMBL" id="AL096754">
    <property type="protein sequence ID" value="CAQ09434.1"/>
    <property type="status" value="JOINED"/>
    <property type="molecule type" value="Genomic_DNA"/>
</dbReference>
<dbReference type="EMBL" id="Z68287">
    <property type="protein sequence ID" value="CAQ09434.1"/>
    <property type="status" value="JOINED"/>
    <property type="molecule type" value="Genomic_DNA"/>
</dbReference>
<dbReference type="EMBL" id="Z69042">
    <property type="protein sequence ID" value="CAQ09434.1"/>
    <property type="status" value="JOINED"/>
    <property type="molecule type" value="Genomic_DNA"/>
</dbReference>
<dbReference type="EMBL" id="Z69943">
    <property type="protein sequence ID" value="CAQ09434.1"/>
    <property type="status" value="JOINED"/>
    <property type="molecule type" value="Genomic_DNA"/>
</dbReference>
<dbReference type="EMBL" id="Z70288">
    <property type="protein sequence ID" value="CAQ09434.1"/>
    <property type="status" value="JOINED"/>
    <property type="molecule type" value="Genomic_DNA"/>
</dbReference>
<dbReference type="EMBL" id="Z82173">
    <property type="protein sequence ID" value="CAQ09434.1"/>
    <property type="status" value="JOINED"/>
    <property type="molecule type" value="Genomic_DNA"/>
</dbReference>
<dbReference type="EMBL" id="Z82173">
    <property type="protein sequence ID" value="CAQ09895.1"/>
    <property type="molecule type" value="Genomic_DNA"/>
</dbReference>
<dbReference type="EMBL" id="AL008630">
    <property type="protein sequence ID" value="CAQ09895.1"/>
    <property type="status" value="JOINED"/>
    <property type="molecule type" value="Genomic_DNA"/>
</dbReference>
<dbReference type="EMBL" id="AL008715">
    <property type="protein sequence ID" value="CAQ09895.1"/>
    <property type="status" value="JOINED"/>
    <property type="molecule type" value="Genomic_DNA"/>
</dbReference>
<dbReference type="EMBL" id="AL096754">
    <property type="protein sequence ID" value="CAQ09895.1"/>
    <property type="status" value="JOINED"/>
    <property type="molecule type" value="Genomic_DNA"/>
</dbReference>
<dbReference type="EMBL" id="Z68287">
    <property type="protein sequence ID" value="CAQ09895.1"/>
    <property type="status" value="JOINED"/>
    <property type="molecule type" value="Genomic_DNA"/>
</dbReference>
<dbReference type="EMBL" id="Z69042">
    <property type="protein sequence ID" value="CAQ09895.1"/>
    <property type="status" value="JOINED"/>
    <property type="molecule type" value="Genomic_DNA"/>
</dbReference>
<dbReference type="EMBL" id="Z69943">
    <property type="protein sequence ID" value="CAQ09895.1"/>
    <property type="status" value="JOINED"/>
    <property type="molecule type" value="Genomic_DNA"/>
</dbReference>
<dbReference type="EMBL" id="Z70288">
    <property type="protein sequence ID" value="CAQ09895.1"/>
    <property type="status" value="JOINED"/>
    <property type="molecule type" value="Genomic_DNA"/>
</dbReference>
<dbReference type="EMBL" id="Z69042">
    <property type="protein sequence ID" value="CAQ10763.1"/>
    <property type="molecule type" value="Genomic_DNA"/>
</dbReference>
<dbReference type="EMBL" id="AL008630">
    <property type="protein sequence ID" value="CAQ10763.1"/>
    <property type="status" value="JOINED"/>
    <property type="molecule type" value="Genomic_DNA"/>
</dbReference>
<dbReference type="EMBL" id="AL008715">
    <property type="protein sequence ID" value="CAQ10763.1"/>
    <property type="status" value="JOINED"/>
    <property type="molecule type" value="Genomic_DNA"/>
</dbReference>
<dbReference type="EMBL" id="AL096754">
    <property type="protein sequence ID" value="CAQ10763.1"/>
    <property type="status" value="JOINED"/>
    <property type="molecule type" value="Genomic_DNA"/>
</dbReference>
<dbReference type="EMBL" id="Z68287">
    <property type="protein sequence ID" value="CAQ10763.1"/>
    <property type="status" value="JOINED"/>
    <property type="molecule type" value="Genomic_DNA"/>
</dbReference>
<dbReference type="EMBL" id="Z69943">
    <property type="protein sequence ID" value="CAQ10763.1"/>
    <property type="status" value="JOINED"/>
    <property type="molecule type" value="Genomic_DNA"/>
</dbReference>
<dbReference type="EMBL" id="Z70288">
    <property type="protein sequence ID" value="CAQ10763.1"/>
    <property type="status" value="JOINED"/>
    <property type="molecule type" value="Genomic_DNA"/>
</dbReference>
<dbReference type="EMBL" id="Z82173">
    <property type="protein sequence ID" value="CAQ10763.1"/>
    <property type="status" value="JOINED"/>
    <property type="molecule type" value="Genomic_DNA"/>
</dbReference>
<dbReference type="EMBL" id="Z70288">
    <property type="protein sequence ID" value="CAQ11002.1"/>
    <property type="molecule type" value="Genomic_DNA"/>
</dbReference>
<dbReference type="EMBL" id="AL008630">
    <property type="protein sequence ID" value="CAQ11002.1"/>
    <property type="status" value="JOINED"/>
    <property type="molecule type" value="Genomic_DNA"/>
</dbReference>
<dbReference type="EMBL" id="AL008715">
    <property type="protein sequence ID" value="CAQ11002.1"/>
    <property type="status" value="JOINED"/>
    <property type="molecule type" value="Genomic_DNA"/>
</dbReference>
<dbReference type="EMBL" id="AL096754">
    <property type="protein sequence ID" value="CAQ11002.1"/>
    <property type="status" value="JOINED"/>
    <property type="molecule type" value="Genomic_DNA"/>
</dbReference>
<dbReference type="EMBL" id="Z68287">
    <property type="protein sequence ID" value="CAQ11002.1"/>
    <property type="status" value="JOINED"/>
    <property type="molecule type" value="Genomic_DNA"/>
</dbReference>
<dbReference type="EMBL" id="Z69042">
    <property type="protein sequence ID" value="CAQ11002.1"/>
    <property type="status" value="JOINED"/>
    <property type="molecule type" value="Genomic_DNA"/>
</dbReference>
<dbReference type="EMBL" id="Z69943">
    <property type="protein sequence ID" value="CAQ11002.1"/>
    <property type="status" value="JOINED"/>
    <property type="molecule type" value="Genomic_DNA"/>
</dbReference>
<dbReference type="EMBL" id="Z82173">
    <property type="protein sequence ID" value="CAQ11002.1"/>
    <property type="status" value="JOINED"/>
    <property type="molecule type" value="Genomic_DNA"/>
</dbReference>
<dbReference type="EMBL" id="BC117425">
    <property type="protein sequence ID" value="AAI17426.1"/>
    <property type="molecule type" value="mRNA"/>
</dbReference>
<dbReference type="EMBL" id="BC126404">
    <property type="protein sequence ID" value="AAI26405.1"/>
    <property type="molecule type" value="mRNA"/>
</dbReference>
<dbReference type="CCDS" id="CCDS13912.1">
    <molecule id="O95461-1"/>
</dbReference>
<dbReference type="CCDS" id="CCDS93153.1">
    <molecule id="O95461-2"/>
</dbReference>
<dbReference type="PIR" id="T00256">
    <property type="entry name" value="T00256"/>
</dbReference>
<dbReference type="RefSeq" id="NP_001349878.1">
    <molecule id="O95461-1"/>
    <property type="nucleotide sequence ID" value="NM_001362949.2"/>
</dbReference>
<dbReference type="RefSeq" id="NP_001349880.1">
    <molecule id="O95461-1"/>
    <property type="nucleotide sequence ID" value="NM_001362951.2"/>
</dbReference>
<dbReference type="RefSeq" id="NP_001349882.1">
    <molecule id="O95461-1"/>
    <property type="nucleotide sequence ID" value="NM_001362953.2"/>
</dbReference>
<dbReference type="RefSeq" id="NP_001365553.1">
    <molecule id="O95461-1"/>
    <property type="nucleotide sequence ID" value="NM_001378624.1"/>
</dbReference>
<dbReference type="RefSeq" id="NP_001365554.1">
    <molecule id="O95461-1"/>
    <property type="nucleotide sequence ID" value="NM_001378625.1"/>
</dbReference>
<dbReference type="RefSeq" id="NP_001365555.1">
    <molecule id="O95461-1"/>
    <property type="nucleotide sequence ID" value="NM_001378626.1"/>
</dbReference>
<dbReference type="RefSeq" id="NP_001365558.1">
    <molecule id="O95461-2"/>
    <property type="nucleotide sequence ID" value="NM_001378629.1"/>
</dbReference>
<dbReference type="RefSeq" id="NP_004728.1">
    <molecule id="O95461-1"/>
    <property type="nucleotide sequence ID" value="NM_004737.7"/>
</dbReference>
<dbReference type="RefSeq" id="NP_598397.1">
    <molecule id="O95461-1"/>
    <property type="nucleotide sequence ID" value="NM_133642.5"/>
</dbReference>
<dbReference type="RefSeq" id="XP_005261888.1">
    <property type="nucleotide sequence ID" value="XM_005261831.3"/>
</dbReference>
<dbReference type="RefSeq" id="XP_005261889.1">
    <property type="nucleotide sequence ID" value="XM_005261832.3"/>
</dbReference>
<dbReference type="RefSeq" id="XP_011528812.1">
    <property type="nucleotide sequence ID" value="XM_011530510.2"/>
</dbReference>
<dbReference type="RefSeq" id="XP_047297555.1">
    <molecule id="O95461-1"/>
    <property type="nucleotide sequence ID" value="XM_047441599.1"/>
</dbReference>
<dbReference type="RefSeq" id="XP_047297556.1">
    <molecule id="O95461-1"/>
    <property type="nucleotide sequence ID" value="XM_047441600.1"/>
</dbReference>
<dbReference type="RefSeq" id="XP_047297557.1">
    <molecule id="O95461-1"/>
    <property type="nucleotide sequence ID" value="XM_047441601.1"/>
</dbReference>
<dbReference type="RefSeq" id="XP_047297558.1">
    <molecule id="O95461-1"/>
    <property type="nucleotide sequence ID" value="XM_047441602.1"/>
</dbReference>
<dbReference type="RefSeq" id="XP_054182108.1">
    <molecule id="O95461-1"/>
    <property type="nucleotide sequence ID" value="XM_054326133.1"/>
</dbReference>
<dbReference type="RefSeq" id="XP_054182109.1">
    <molecule id="O95461-1"/>
    <property type="nucleotide sequence ID" value="XM_054326134.1"/>
</dbReference>
<dbReference type="PDB" id="7UI6">
    <property type="method" value="EM"/>
    <property type="resolution" value="3.70 A"/>
    <property type="chains" value="A/B=34-756"/>
</dbReference>
<dbReference type="PDB" id="7UI7">
    <property type="method" value="EM"/>
    <property type="resolution" value="3.40 A"/>
    <property type="chains" value="A/B=34-756"/>
</dbReference>
<dbReference type="PDB" id="7ZVJ">
    <property type="method" value="X-ray"/>
    <property type="resolution" value="2.61 A"/>
    <property type="chains" value="A/B=134-752"/>
</dbReference>
<dbReference type="PDB" id="9E1T">
    <property type="method" value="EM"/>
    <property type="resolution" value="3.00 A"/>
    <property type="chains" value="A/B=34-756"/>
</dbReference>
<dbReference type="PDBsum" id="7UI6"/>
<dbReference type="PDBsum" id="7UI7"/>
<dbReference type="PDBsum" id="7ZVJ"/>
<dbReference type="PDBsum" id="9E1T"/>
<dbReference type="EMDB" id="EMD-14985"/>
<dbReference type="EMDB" id="EMD-14987"/>
<dbReference type="EMDB" id="EMD-26540"/>
<dbReference type="EMDB" id="EMD-26541"/>
<dbReference type="EMDB" id="EMD-47420"/>
<dbReference type="SASBDB" id="O95461"/>
<dbReference type="SMR" id="O95461"/>
<dbReference type="BioGRID" id="114649">
    <property type="interactions" value="23"/>
</dbReference>
<dbReference type="DIP" id="DIP-48922N"/>
<dbReference type="FunCoup" id="O95461">
    <property type="interactions" value="907"/>
</dbReference>
<dbReference type="IntAct" id="O95461">
    <property type="interactions" value="21"/>
</dbReference>
<dbReference type="STRING" id="9606.ENSP00000347088"/>
<dbReference type="BindingDB" id="O95461"/>
<dbReference type="ChEMBL" id="CHEMBL2146300"/>
<dbReference type="CAZy" id="GT49">
    <property type="family name" value="Glycosyltransferase Family 49"/>
</dbReference>
<dbReference type="CAZy" id="GT8">
    <property type="family name" value="Glycosyltransferase Family 8"/>
</dbReference>
<dbReference type="GlyCosmos" id="O95461">
    <property type="glycosylation" value="4 sites, No reported glycans"/>
</dbReference>
<dbReference type="GlyGen" id="O95461">
    <property type="glycosylation" value="4 sites, 1 N-linked glycan (2 sites)"/>
</dbReference>
<dbReference type="iPTMnet" id="O95461"/>
<dbReference type="PhosphoSitePlus" id="O95461"/>
<dbReference type="SwissPalm" id="O95461"/>
<dbReference type="BioMuta" id="LARGE1"/>
<dbReference type="MassIVE" id="O95461"/>
<dbReference type="PaxDb" id="9606-ENSP00000347088"/>
<dbReference type="PeptideAtlas" id="O95461"/>
<dbReference type="ProteomicsDB" id="50896">
    <molecule id="O95461-1"/>
</dbReference>
<dbReference type="ProteomicsDB" id="50897">
    <molecule id="O95461-2"/>
</dbReference>
<dbReference type="Antibodypedia" id="25305">
    <property type="antibodies" value="164 antibodies from 28 providers"/>
</dbReference>
<dbReference type="DNASU" id="9215"/>
<dbReference type="Ensembl" id="ENST00000354992.7">
    <molecule id="O95461-1"/>
    <property type="protein sequence ID" value="ENSP00000347088.2"/>
    <property type="gene ID" value="ENSG00000133424.22"/>
</dbReference>
<dbReference type="Ensembl" id="ENST00000397394.8">
    <molecule id="O95461-1"/>
    <property type="protein sequence ID" value="ENSP00000380549.2"/>
    <property type="gene ID" value="ENSG00000133424.22"/>
</dbReference>
<dbReference type="Ensembl" id="ENST00000402320.6">
    <molecule id="O95461-2"/>
    <property type="protein sequence ID" value="ENSP00000385223.1"/>
    <property type="gene ID" value="ENSG00000133424.22"/>
</dbReference>
<dbReference type="Ensembl" id="ENST00000413114.6">
    <molecule id="O95461-1"/>
    <property type="protein sequence ID" value="ENSP00000415546.2"/>
    <property type="gene ID" value="ENSG00000133424.22"/>
</dbReference>
<dbReference type="Ensembl" id="ENST00000675416.1">
    <molecule id="O95461-1"/>
    <property type="protein sequence ID" value="ENSP00000502826.1"/>
    <property type="gene ID" value="ENSG00000133424.22"/>
</dbReference>
<dbReference type="Ensembl" id="ENST00000676070.1">
    <molecule id="O95461-1"/>
    <property type="protein sequence ID" value="ENSP00000502152.1"/>
    <property type="gene ID" value="ENSG00000133424.22"/>
</dbReference>
<dbReference type="Ensembl" id="ENST00000676132.1">
    <molecule id="O95461-1"/>
    <property type="protein sequence ID" value="ENSP00000501854.1"/>
    <property type="gene ID" value="ENSG00000133424.22"/>
</dbReference>
<dbReference type="Ensembl" id="ENST00000676370.1">
    <molecule id="O95461-1"/>
    <property type="protein sequence ID" value="ENSP00000502238.1"/>
    <property type="gene ID" value="ENSG00000133424.22"/>
</dbReference>
<dbReference type="GeneID" id="9215"/>
<dbReference type="KEGG" id="hsa:9215"/>
<dbReference type="MANE-Select" id="ENST00000397394.8">
    <property type="protein sequence ID" value="ENSP00000380549.2"/>
    <property type="RefSeq nucleotide sequence ID" value="NM_133642.5"/>
    <property type="RefSeq protein sequence ID" value="NP_598397.1"/>
</dbReference>
<dbReference type="UCSC" id="uc010gwp.4">
    <molecule id="O95461-1"/>
    <property type="organism name" value="human"/>
</dbReference>
<dbReference type="AGR" id="HGNC:6511"/>
<dbReference type="CTD" id="9215"/>
<dbReference type="DisGeNET" id="9215"/>
<dbReference type="GeneCards" id="LARGE1"/>
<dbReference type="HGNC" id="HGNC:6511">
    <property type="gene designation" value="LARGE1"/>
</dbReference>
<dbReference type="HPA" id="ENSG00000133424">
    <property type="expression patterns" value="Low tissue specificity"/>
</dbReference>
<dbReference type="MalaCards" id="LARGE1"/>
<dbReference type="MIM" id="603590">
    <property type="type" value="gene"/>
</dbReference>
<dbReference type="MIM" id="608840">
    <property type="type" value="phenotype"/>
</dbReference>
<dbReference type="MIM" id="613154">
    <property type="type" value="phenotype"/>
</dbReference>
<dbReference type="neXtProt" id="NX_O95461"/>
<dbReference type="OpenTargets" id="ENSG00000133424"/>
<dbReference type="Orphanet" id="370968">
    <property type="disease" value="Congenital muscular dystrophy with intellectual disability"/>
</dbReference>
<dbReference type="Orphanet" id="588">
    <property type="disease" value="Muscle-eye-brain disease"/>
</dbReference>
<dbReference type="Orphanet" id="899">
    <property type="disease" value="Walker-Warburg syndrome"/>
</dbReference>
<dbReference type="PharmGKB" id="PA30296"/>
<dbReference type="VEuPathDB" id="HostDB:ENSG00000133424"/>
<dbReference type="eggNOG" id="KOG3765">
    <property type="taxonomic scope" value="Eukaryota"/>
</dbReference>
<dbReference type="GeneTree" id="ENSGT00940000158497"/>
<dbReference type="HOGENOM" id="CLU_019238_3_2_1"/>
<dbReference type="InParanoid" id="O95461"/>
<dbReference type="OMA" id="EPYEVSW"/>
<dbReference type="OrthoDB" id="411524at2759"/>
<dbReference type="PAN-GO" id="O95461">
    <property type="GO annotations" value="4 GO annotations based on evolutionary models"/>
</dbReference>
<dbReference type="PhylomeDB" id="O95461"/>
<dbReference type="TreeFam" id="TF319168"/>
<dbReference type="BioCyc" id="MetaCyc:ENSG00000133424-MONOMER"/>
<dbReference type="BRENDA" id="2.4.1.B80">
    <property type="organism ID" value="2681"/>
</dbReference>
<dbReference type="BRENDA" id="2.4.2.B18">
    <property type="organism ID" value="2681"/>
</dbReference>
<dbReference type="PathwayCommons" id="O95461"/>
<dbReference type="Reactome" id="R-HSA-5083627">
    <property type="pathway name" value="Defective LARGE causes MDDGA6 and MDDGB6"/>
</dbReference>
<dbReference type="Reactome" id="R-HSA-5173105">
    <property type="pathway name" value="O-linked glycosylation"/>
</dbReference>
<dbReference type="SignaLink" id="O95461"/>
<dbReference type="UniPathway" id="UPA00378"/>
<dbReference type="BioGRID-ORCS" id="9215">
    <property type="hits" value="12 hits in 1144 CRISPR screens"/>
</dbReference>
<dbReference type="ChiTaRS" id="LARGE1">
    <property type="organism name" value="human"/>
</dbReference>
<dbReference type="GeneWiki" id="LARGE"/>
<dbReference type="GenomeRNAi" id="9215"/>
<dbReference type="Pharos" id="O95461">
    <property type="development level" value="Tbio"/>
</dbReference>
<dbReference type="PRO" id="PR:O95461"/>
<dbReference type="Proteomes" id="UP000005640">
    <property type="component" value="Chromosome 22"/>
</dbReference>
<dbReference type="RNAct" id="O95461">
    <property type="molecule type" value="protein"/>
</dbReference>
<dbReference type="Bgee" id="ENSG00000133424">
    <property type="expression patterns" value="Expressed in heart left ventricle and 164 other cell types or tissues"/>
</dbReference>
<dbReference type="ExpressionAtlas" id="O95461">
    <property type="expression patterns" value="baseline and differential"/>
</dbReference>
<dbReference type="GO" id="GO:0005794">
    <property type="term" value="C:Golgi apparatus"/>
    <property type="evidence" value="ECO:0000314"/>
    <property type="project" value="UniProtKB"/>
</dbReference>
<dbReference type="GO" id="GO:0000139">
    <property type="term" value="C:Golgi membrane"/>
    <property type="evidence" value="ECO:0000304"/>
    <property type="project" value="UniProtKB"/>
</dbReference>
<dbReference type="GO" id="GO:0031594">
    <property type="term" value="C:neuromuscular junction"/>
    <property type="evidence" value="ECO:0007669"/>
    <property type="project" value="Ensembl"/>
</dbReference>
<dbReference type="GO" id="GO:0005886">
    <property type="term" value="C:plasma membrane"/>
    <property type="evidence" value="ECO:0007669"/>
    <property type="project" value="Ensembl"/>
</dbReference>
<dbReference type="GO" id="GO:0032991">
    <property type="term" value="C:protein-containing complex"/>
    <property type="evidence" value="ECO:0007669"/>
    <property type="project" value="Ensembl"/>
</dbReference>
<dbReference type="GO" id="GO:0008375">
    <property type="term" value="F:acetylglucosaminyltransferase activity"/>
    <property type="evidence" value="ECO:0000304"/>
    <property type="project" value="ProtInc"/>
</dbReference>
<dbReference type="GO" id="GO:0015020">
    <property type="term" value="F:glucuronosyltransferase activity"/>
    <property type="evidence" value="ECO:0000314"/>
    <property type="project" value="UniProtKB"/>
</dbReference>
<dbReference type="GO" id="GO:0016757">
    <property type="term" value="F:glycosyltransferase activity"/>
    <property type="evidence" value="ECO:0000304"/>
    <property type="project" value="UniProtKB"/>
</dbReference>
<dbReference type="GO" id="GO:0016758">
    <property type="term" value="F:hexosyltransferase activity"/>
    <property type="evidence" value="ECO:0000314"/>
    <property type="project" value="UniProtKB"/>
</dbReference>
<dbReference type="GO" id="GO:0030145">
    <property type="term" value="F:manganese ion binding"/>
    <property type="evidence" value="ECO:0000314"/>
    <property type="project" value="UniProtKB"/>
</dbReference>
<dbReference type="GO" id="GO:0035252">
    <property type="term" value="F:UDP-xylosyltransferase activity"/>
    <property type="evidence" value="ECO:0000304"/>
    <property type="project" value="Reactome"/>
</dbReference>
<dbReference type="GO" id="GO:0042285">
    <property type="term" value="F:xylosyltransferase activity"/>
    <property type="evidence" value="ECO:0000314"/>
    <property type="project" value="UniProtKB"/>
</dbReference>
<dbReference type="GO" id="GO:0095500">
    <property type="term" value="P:acetylcholine receptor signaling pathway"/>
    <property type="evidence" value="ECO:0007669"/>
    <property type="project" value="Ensembl"/>
</dbReference>
<dbReference type="GO" id="GO:0048708">
    <property type="term" value="P:astrocyte differentiation"/>
    <property type="evidence" value="ECO:0007669"/>
    <property type="project" value="Ensembl"/>
</dbReference>
<dbReference type="GO" id="GO:0071711">
    <property type="term" value="P:basement membrane organization"/>
    <property type="evidence" value="ECO:0007669"/>
    <property type="project" value="Ensembl"/>
</dbReference>
<dbReference type="GO" id="GO:0001662">
    <property type="term" value="P:behavioral fear response"/>
    <property type="evidence" value="ECO:0007669"/>
    <property type="project" value="Ensembl"/>
</dbReference>
<dbReference type="GO" id="GO:0001568">
    <property type="term" value="P:blood vessel development"/>
    <property type="evidence" value="ECO:0007669"/>
    <property type="project" value="Ensembl"/>
</dbReference>
<dbReference type="GO" id="GO:0060348">
    <property type="term" value="P:bone development"/>
    <property type="evidence" value="ECO:0007669"/>
    <property type="project" value="Ensembl"/>
</dbReference>
<dbReference type="GO" id="GO:0055013">
    <property type="term" value="P:cardiac muscle cell development"/>
    <property type="evidence" value="ECO:0007669"/>
    <property type="project" value="Ensembl"/>
</dbReference>
<dbReference type="GO" id="GO:0061448">
    <property type="term" value="P:connective tissue development"/>
    <property type="evidence" value="ECO:0007669"/>
    <property type="project" value="Ensembl"/>
</dbReference>
<dbReference type="GO" id="GO:0007010">
    <property type="term" value="P:cytoskeleton organization"/>
    <property type="evidence" value="ECO:0007669"/>
    <property type="project" value="Ensembl"/>
</dbReference>
<dbReference type="GO" id="GO:0021542">
    <property type="term" value="P:dentate gyrus development"/>
    <property type="evidence" value="ECO:0007669"/>
    <property type="project" value="Ensembl"/>
</dbReference>
<dbReference type="GO" id="GO:0008340">
    <property type="term" value="P:determination of adult lifespan"/>
    <property type="evidence" value="ECO:0007669"/>
    <property type="project" value="Ensembl"/>
</dbReference>
<dbReference type="GO" id="GO:0010467">
    <property type="term" value="P:gene expression"/>
    <property type="evidence" value="ECO:0007669"/>
    <property type="project" value="Ensembl"/>
</dbReference>
<dbReference type="GO" id="GO:0009101">
    <property type="term" value="P:glycoprotein biosynthetic process"/>
    <property type="evidence" value="ECO:0000304"/>
    <property type="project" value="UniProtKB"/>
</dbReference>
<dbReference type="GO" id="GO:0006688">
    <property type="term" value="P:glycosphingolipid biosynthetic process"/>
    <property type="evidence" value="ECO:0000304"/>
    <property type="project" value="UniProtKB"/>
</dbReference>
<dbReference type="GO" id="GO:0006886">
    <property type="term" value="P:intracellular protein transport"/>
    <property type="evidence" value="ECO:0007669"/>
    <property type="project" value="Ensembl"/>
</dbReference>
<dbReference type="GO" id="GO:0051674">
    <property type="term" value="P:localization of cell"/>
    <property type="evidence" value="ECO:0007669"/>
    <property type="project" value="Ensembl"/>
</dbReference>
<dbReference type="GO" id="GO:0060291">
    <property type="term" value="P:long-term synaptic potentiation"/>
    <property type="evidence" value="ECO:0007669"/>
    <property type="project" value="Ensembl"/>
</dbReference>
<dbReference type="GO" id="GO:0030225">
    <property type="term" value="P:macrophage differentiation"/>
    <property type="evidence" value="ECO:0007669"/>
    <property type="project" value="Ensembl"/>
</dbReference>
<dbReference type="GO" id="GO:0007613">
    <property type="term" value="P:memory"/>
    <property type="evidence" value="ECO:0007669"/>
    <property type="project" value="Ensembl"/>
</dbReference>
<dbReference type="GO" id="GO:0035264">
    <property type="term" value="P:multicellular organism growth"/>
    <property type="evidence" value="ECO:0007669"/>
    <property type="project" value="Ensembl"/>
</dbReference>
<dbReference type="GO" id="GO:0046716">
    <property type="term" value="P:muscle cell cellular homeostasis"/>
    <property type="evidence" value="ECO:0000250"/>
    <property type="project" value="UniProtKB"/>
</dbReference>
<dbReference type="GO" id="GO:0042552">
    <property type="term" value="P:myelination"/>
    <property type="evidence" value="ECO:0007669"/>
    <property type="project" value="Ensembl"/>
</dbReference>
<dbReference type="GO" id="GO:0006044">
    <property type="term" value="P:N-acetylglucosamine metabolic process"/>
    <property type="evidence" value="ECO:0000304"/>
    <property type="project" value="ProtInc"/>
</dbReference>
<dbReference type="GO" id="GO:0021675">
    <property type="term" value="P:nerve development"/>
    <property type="evidence" value="ECO:0007669"/>
    <property type="project" value="Ensembl"/>
</dbReference>
<dbReference type="GO" id="GO:0050884">
    <property type="term" value="P:neuromuscular process controlling posture"/>
    <property type="evidence" value="ECO:0007669"/>
    <property type="project" value="Ensembl"/>
</dbReference>
<dbReference type="GO" id="GO:0007274">
    <property type="term" value="P:neuromuscular synaptic transmission"/>
    <property type="evidence" value="ECO:0007669"/>
    <property type="project" value="Ensembl"/>
</dbReference>
<dbReference type="GO" id="GO:0001764">
    <property type="term" value="P:neuron migration"/>
    <property type="evidence" value="ECO:0007669"/>
    <property type="project" value="Ensembl"/>
</dbReference>
<dbReference type="GO" id="GO:0007009">
    <property type="term" value="P:plasma membrane organization"/>
    <property type="evidence" value="ECO:0007669"/>
    <property type="project" value="Ensembl"/>
</dbReference>
<dbReference type="GO" id="GO:0035129">
    <property type="term" value="P:post-embryonic hindlimb morphogenesis"/>
    <property type="evidence" value="ECO:0007669"/>
    <property type="project" value="Ensembl"/>
</dbReference>
<dbReference type="GO" id="GO:0043687">
    <property type="term" value="P:post-translational protein modification"/>
    <property type="evidence" value="ECO:0007669"/>
    <property type="project" value="Ensembl"/>
</dbReference>
<dbReference type="GO" id="GO:0071805">
    <property type="term" value="P:potassium ion transmembrane transport"/>
    <property type="evidence" value="ECO:0007669"/>
    <property type="project" value="Ensembl"/>
</dbReference>
<dbReference type="GO" id="GO:0021740">
    <property type="term" value="P:principal sensory nucleus of trigeminal nerve development"/>
    <property type="evidence" value="ECO:0007669"/>
    <property type="project" value="Ensembl"/>
</dbReference>
<dbReference type="GO" id="GO:0006486">
    <property type="term" value="P:protein glycosylation"/>
    <property type="evidence" value="ECO:0000315"/>
    <property type="project" value="UniProtKB"/>
</dbReference>
<dbReference type="GO" id="GO:0072659">
    <property type="term" value="P:protein localization to plasma membrane"/>
    <property type="evidence" value="ECO:0007669"/>
    <property type="project" value="Ensembl"/>
</dbReference>
<dbReference type="GO" id="GO:0006493">
    <property type="term" value="P:protein O-linked glycosylation"/>
    <property type="evidence" value="ECO:0000304"/>
    <property type="project" value="Reactome"/>
</dbReference>
<dbReference type="GO" id="GO:0035269">
    <property type="term" value="P:protein O-linked mannosylation"/>
    <property type="evidence" value="ECO:0000314"/>
    <property type="project" value="UniProtKB"/>
</dbReference>
<dbReference type="GO" id="GO:0006612">
    <property type="term" value="P:protein targeting to membrane"/>
    <property type="evidence" value="ECO:0007669"/>
    <property type="project" value="Ensembl"/>
</dbReference>
<dbReference type="GO" id="GO:0065003">
    <property type="term" value="P:protein-containing complex assembly"/>
    <property type="evidence" value="ECO:0007669"/>
    <property type="project" value="Ensembl"/>
</dbReference>
<dbReference type="GO" id="GO:0150103">
    <property type="term" value="P:reactive gliosis"/>
    <property type="evidence" value="ECO:0007669"/>
    <property type="project" value="Ensembl"/>
</dbReference>
<dbReference type="GO" id="GO:0009416">
    <property type="term" value="P:response to light stimulus"/>
    <property type="evidence" value="ECO:0007669"/>
    <property type="project" value="Ensembl"/>
</dbReference>
<dbReference type="GO" id="GO:0009612">
    <property type="term" value="P:response to mechanical stimulus"/>
    <property type="evidence" value="ECO:0007669"/>
    <property type="project" value="Ensembl"/>
</dbReference>
<dbReference type="GO" id="GO:0010842">
    <property type="term" value="P:retina layer formation"/>
    <property type="evidence" value="ECO:0007669"/>
    <property type="project" value="Ensembl"/>
</dbReference>
<dbReference type="GO" id="GO:0061298">
    <property type="term" value="P:retina vasculature development in camera-type eye"/>
    <property type="evidence" value="ECO:0007669"/>
    <property type="project" value="Ensembl"/>
</dbReference>
<dbReference type="GO" id="GO:0007605">
    <property type="term" value="P:sensory perception of sound"/>
    <property type="evidence" value="ECO:0007669"/>
    <property type="project" value="Ensembl"/>
</dbReference>
<dbReference type="GO" id="GO:0048741">
    <property type="term" value="P:skeletal muscle fiber development"/>
    <property type="evidence" value="ECO:0007669"/>
    <property type="project" value="Ensembl"/>
</dbReference>
<dbReference type="GO" id="GO:0098528">
    <property type="term" value="P:skeletal muscle fiber differentiation"/>
    <property type="evidence" value="ECO:0007669"/>
    <property type="project" value="Ensembl"/>
</dbReference>
<dbReference type="GO" id="GO:0060538">
    <property type="term" value="P:skeletal muscle organ development"/>
    <property type="evidence" value="ECO:0000250"/>
    <property type="project" value="UniProtKB"/>
</dbReference>
<dbReference type="GO" id="GO:0043403">
    <property type="term" value="P:skeletal muscle tissue regeneration"/>
    <property type="evidence" value="ECO:0000250"/>
    <property type="project" value="UniProtKB"/>
</dbReference>
<dbReference type="GO" id="GO:0006941">
    <property type="term" value="P:striated muscle contraction"/>
    <property type="evidence" value="ECO:0007669"/>
    <property type="project" value="Ensembl"/>
</dbReference>
<dbReference type="GO" id="GO:0051124">
    <property type="term" value="P:synaptic assembly at neuromuscular junction"/>
    <property type="evidence" value="ECO:0007669"/>
    <property type="project" value="Ensembl"/>
</dbReference>
<dbReference type="GO" id="GO:0090659">
    <property type="term" value="P:walking behavior"/>
    <property type="evidence" value="ECO:0007669"/>
    <property type="project" value="Ensembl"/>
</dbReference>
<dbReference type="GO" id="GO:0006833">
    <property type="term" value="P:water transport"/>
    <property type="evidence" value="ECO:0007669"/>
    <property type="project" value="Ensembl"/>
</dbReference>
<dbReference type="CDD" id="cd06431">
    <property type="entry name" value="GT8_LARGE_C"/>
    <property type="match status" value="1"/>
</dbReference>
<dbReference type="FunFam" id="3.90.550.10:FF:000229">
    <property type="entry name" value="Glycosyltransferase-like protein LARGE"/>
    <property type="match status" value="1"/>
</dbReference>
<dbReference type="FunFam" id="3.90.550.10:FF:000016">
    <property type="entry name" value="LARGE xylosyl- and glucuronyltransferase 2"/>
    <property type="match status" value="1"/>
</dbReference>
<dbReference type="Gene3D" id="3.90.550.10">
    <property type="entry name" value="Spore Coat Polysaccharide Biosynthesis Protein SpsA, Chain A"/>
    <property type="match status" value="1"/>
</dbReference>
<dbReference type="InterPro" id="IPR002495">
    <property type="entry name" value="Glyco_trans_8"/>
</dbReference>
<dbReference type="InterPro" id="IPR029044">
    <property type="entry name" value="Nucleotide-diphossugar_trans"/>
</dbReference>
<dbReference type="InterPro" id="IPR051292">
    <property type="entry name" value="Xyl/GlcA_transferase"/>
</dbReference>
<dbReference type="PANTHER" id="PTHR12270">
    <property type="entry name" value="GLYCOSYLTRANSFERASE-RELATED"/>
    <property type="match status" value="1"/>
</dbReference>
<dbReference type="PANTHER" id="PTHR12270:SF48">
    <property type="entry name" value="XYLOSYL- AND GLUCURONYLTRANSFERASE LARGE1"/>
    <property type="match status" value="1"/>
</dbReference>
<dbReference type="Pfam" id="PF13896">
    <property type="entry name" value="Glyco_transf_49"/>
    <property type="match status" value="1"/>
</dbReference>
<dbReference type="Pfam" id="PF01501">
    <property type="entry name" value="Glyco_transf_8"/>
    <property type="match status" value="1"/>
</dbReference>
<dbReference type="SUPFAM" id="SSF53448">
    <property type="entry name" value="Nucleotide-diphospho-sugar transferases"/>
    <property type="match status" value="1"/>
</dbReference>
<protein>
    <recommendedName>
        <fullName evidence="20">Xylosyl- and glucuronyltransferase LARGE1</fullName>
        <ecNumber evidence="12">2.4.-.-</ecNumber>
    </recommendedName>
    <alternativeName>
        <fullName>Acetylglucosaminyltransferase-like 1A</fullName>
    </alternativeName>
    <alternativeName>
        <fullName>Glycosyltransferase-like protein</fullName>
    </alternativeName>
    <alternativeName>
        <fullName evidence="26">LARGE xylosyl- and glucuronyltransferase 1</fullName>
    </alternativeName>
    <domain>
        <recommendedName>
            <fullName evidence="20">Alpha-1,3-xylosyltransferase LARGE1</fullName>
            <ecNumber evidence="12">2.4.2.-</ecNumber>
        </recommendedName>
    </domain>
    <domain>
        <recommendedName>
            <fullName evidence="20">Beta-1,3-glucuronyltransferase LARGE1</fullName>
            <ecNumber evidence="12 16 17">2.4.1.-</ecNumber>
        </recommendedName>
    </domain>
</protein>
<proteinExistence type="evidence at protein level"/>
<reference key="1">
    <citation type="journal article" date="1999" name="Proc. Natl. Acad. Sci. U.S.A.">
        <title>The human LARGE gene from 22q12.3-q13.1 is a new, distinct member of the glycosyltransferase gene family.</title>
        <authorList>
            <person name="Peyrard M."/>
            <person name="Seroussi E."/>
            <person name="Sandberg-Nordqvist A.-C."/>
            <person name="Xie Y.-G."/>
            <person name="Han F.-Y."/>
            <person name="Fransson I."/>
            <person name="Collins J.E."/>
            <person name="Dunham I."/>
            <person name="Kost-Alimova M."/>
            <person name="Imreh S."/>
            <person name="Dumanski J.P."/>
        </authorList>
    </citation>
    <scope>NUCLEOTIDE SEQUENCE [MRNA] (ISOFORM 1)</scope>
    <source>
        <tissue>Fetal brain</tissue>
    </source>
</reference>
<reference key="2">
    <citation type="journal article" date="1998" name="DNA Res.">
        <title>Prediction of the coding sequences of unidentified human genes. IX. The complete sequences of 100 new cDNA clones from brain which can code for large proteins in vitro.</title>
        <authorList>
            <person name="Nagase T."/>
            <person name="Ishikawa K."/>
            <person name="Miyajima N."/>
            <person name="Tanaka A."/>
            <person name="Kotani H."/>
            <person name="Nomura N."/>
            <person name="Ohara O."/>
        </authorList>
    </citation>
    <scope>NUCLEOTIDE SEQUENCE [LARGE SCALE MRNA] (ISOFORM 2)</scope>
    <source>
        <tissue>Brain</tissue>
    </source>
</reference>
<reference key="3">
    <citation type="journal article" date="2004" name="Genome Biol.">
        <title>A genome annotation-driven approach to cloning the human ORFeome.</title>
        <authorList>
            <person name="Collins J.E."/>
            <person name="Wright C.L."/>
            <person name="Edwards C.A."/>
            <person name="Davis M.P."/>
            <person name="Grinham J.A."/>
            <person name="Cole C.G."/>
            <person name="Goward M.E."/>
            <person name="Aguado B."/>
            <person name="Mallya M."/>
            <person name="Mokrab Y."/>
            <person name="Huckle E.J."/>
            <person name="Beare D.M."/>
            <person name="Dunham I."/>
        </authorList>
    </citation>
    <scope>NUCLEOTIDE SEQUENCE [LARGE SCALE MRNA] (ISOFORM 1)</scope>
</reference>
<reference key="4">
    <citation type="journal article" date="1999" name="Nature">
        <title>The DNA sequence of human chromosome 22.</title>
        <authorList>
            <person name="Dunham I."/>
            <person name="Hunt A.R."/>
            <person name="Collins J.E."/>
            <person name="Bruskiewich R."/>
            <person name="Beare D.M."/>
            <person name="Clamp M."/>
            <person name="Smink L.J."/>
            <person name="Ainscough R."/>
            <person name="Almeida J.P."/>
            <person name="Babbage A.K."/>
            <person name="Bagguley C."/>
            <person name="Bailey J."/>
            <person name="Barlow K.F."/>
            <person name="Bates K.N."/>
            <person name="Beasley O.P."/>
            <person name="Bird C.P."/>
            <person name="Blakey S.E."/>
            <person name="Bridgeman A.M."/>
            <person name="Buck D."/>
            <person name="Burgess J."/>
            <person name="Burrill W.D."/>
            <person name="Burton J."/>
            <person name="Carder C."/>
            <person name="Carter N.P."/>
            <person name="Chen Y."/>
            <person name="Clark G."/>
            <person name="Clegg S.M."/>
            <person name="Cobley V.E."/>
            <person name="Cole C.G."/>
            <person name="Collier R.E."/>
            <person name="Connor R."/>
            <person name="Conroy D."/>
            <person name="Corby N.R."/>
            <person name="Coville G.J."/>
            <person name="Cox A.V."/>
            <person name="Davis J."/>
            <person name="Dawson E."/>
            <person name="Dhami P.D."/>
            <person name="Dockree C."/>
            <person name="Dodsworth S.J."/>
            <person name="Durbin R.M."/>
            <person name="Ellington A.G."/>
            <person name="Evans K.L."/>
            <person name="Fey J.M."/>
            <person name="Fleming K."/>
            <person name="French L."/>
            <person name="Garner A.A."/>
            <person name="Gilbert J.G.R."/>
            <person name="Goward M.E."/>
            <person name="Grafham D.V."/>
            <person name="Griffiths M.N.D."/>
            <person name="Hall C."/>
            <person name="Hall R.E."/>
            <person name="Hall-Tamlyn G."/>
            <person name="Heathcott R.W."/>
            <person name="Ho S."/>
            <person name="Holmes S."/>
            <person name="Hunt S.E."/>
            <person name="Jones M.C."/>
            <person name="Kershaw J."/>
            <person name="Kimberley A.M."/>
            <person name="King A."/>
            <person name="Laird G.K."/>
            <person name="Langford C.F."/>
            <person name="Leversha M.A."/>
            <person name="Lloyd C."/>
            <person name="Lloyd D.M."/>
            <person name="Martyn I.D."/>
            <person name="Mashreghi-Mohammadi M."/>
            <person name="Matthews L.H."/>
            <person name="Mccann O.T."/>
            <person name="Mcclay J."/>
            <person name="Mclaren S."/>
            <person name="McMurray A.A."/>
            <person name="Milne S.A."/>
            <person name="Mortimore B.J."/>
            <person name="Odell C.N."/>
            <person name="Pavitt R."/>
            <person name="Pearce A.V."/>
            <person name="Pearson D."/>
            <person name="Phillimore B.J.C.T."/>
            <person name="Phillips S.H."/>
            <person name="Plumb R.W."/>
            <person name="Ramsay H."/>
            <person name="Ramsey Y."/>
            <person name="Rogers L."/>
            <person name="Ross M.T."/>
            <person name="Scott C.E."/>
            <person name="Sehra H.K."/>
            <person name="Skuce C.D."/>
            <person name="Smalley S."/>
            <person name="Smith M.L."/>
            <person name="Soderlund C."/>
            <person name="Spragon L."/>
            <person name="Steward C.A."/>
            <person name="Sulston J.E."/>
            <person name="Swann R.M."/>
            <person name="Vaudin M."/>
            <person name="Wall M."/>
            <person name="Wallis J.M."/>
            <person name="Whiteley M.N."/>
            <person name="Willey D.L."/>
            <person name="Williams L."/>
            <person name="Williams S.A."/>
            <person name="Williamson H."/>
            <person name="Wilmer T.E."/>
            <person name="Wilming L."/>
            <person name="Wright C.L."/>
            <person name="Hubbard T."/>
            <person name="Bentley D.R."/>
            <person name="Beck S."/>
            <person name="Rogers J."/>
            <person name="Shimizu N."/>
            <person name="Minoshima S."/>
            <person name="Kawasaki K."/>
            <person name="Sasaki T."/>
            <person name="Asakawa S."/>
            <person name="Kudoh J."/>
            <person name="Shintani A."/>
            <person name="Shibuya K."/>
            <person name="Yoshizaki Y."/>
            <person name="Aoki N."/>
            <person name="Mitsuyama S."/>
            <person name="Roe B.A."/>
            <person name="Chen F."/>
            <person name="Chu L."/>
            <person name="Crabtree J."/>
            <person name="Deschamps S."/>
            <person name="Do A."/>
            <person name="Do T."/>
            <person name="Dorman A."/>
            <person name="Fang F."/>
            <person name="Fu Y."/>
            <person name="Hu P."/>
            <person name="Hua A."/>
            <person name="Kenton S."/>
            <person name="Lai H."/>
            <person name="Lao H.I."/>
            <person name="Lewis J."/>
            <person name="Lewis S."/>
            <person name="Lin S.-P."/>
            <person name="Loh P."/>
            <person name="Malaj E."/>
            <person name="Nguyen T."/>
            <person name="Pan H."/>
            <person name="Phan S."/>
            <person name="Qi S."/>
            <person name="Qian Y."/>
            <person name="Ray L."/>
            <person name="Ren Q."/>
            <person name="Shaull S."/>
            <person name="Sloan D."/>
            <person name="Song L."/>
            <person name="Wang Q."/>
            <person name="Wang Y."/>
            <person name="Wang Z."/>
            <person name="White J."/>
            <person name="Willingham D."/>
            <person name="Wu H."/>
            <person name="Yao Z."/>
            <person name="Zhan M."/>
            <person name="Zhang G."/>
            <person name="Chissoe S."/>
            <person name="Murray J."/>
            <person name="Miller N."/>
            <person name="Minx P."/>
            <person name="Fulton R."/>
            <person name="Johnson D."/>
            <person name="Bemis G."/>
            <person name="Bentley D."/>
            <person name="Bradshaw H."/>
            <person name="Bourne S."/>
            <person name="Cordes M."/>
            <person name="Du Z."/>
            <person name="Fulton L."/>
            <person name="Goela D."/>
            <person name="Graves T."/>
            <person name="Hawkins J."/>
            <person name="Hinds K."/>
            <person name="Kemp K."/>
            <person name="Latreille P."/>
            <person name="Layman D."/>
            <person name="Ozersky P."/>
            <person name="Rohlfing T."/>
            <person name="Scheet P."/>
            <person name="Walker C."/>
            <person name="Wamsley A."/>
            <person name="Wohldmann P."/>
            <person name="Pepin K."/>
            <person name="Nelson J."/>
            <person name="Korf I."/>
            <person name="Bedell J.A."/>
            <person name="Hillier L.W."/>
            <person name="Mardis E."/>
            <person name="Waterston R."/>
            <person name="Wilson R."/>
            <person name="Emanuel B.S."/>
            <person name="Shaikh T."/>
            <person name="Kurahashi H."/>
            <person name="Saitta S."/>
            <person name="Budarf M.L."/>
            <person name="McDermid H.E."/>
            <person name="Johnson A."/>
            <person name="Wong A.C.C."/>
            <person name="Morrow B.E."/>
            <person name="Edelmann L."/>
            <person name="Kim U.J."/>
            <person name="Shizuya H."/>
            <person name="Simon M.I."/>
            <person name="Dumanski J.P."/>
            <person name="Peyrard M."/>
            <person name="Kedra D."/>
            <person name="Seroussi E."/>
            <person name="Fransson I."/>
            <person name="Tapia I."/>
            <person name="Bruder C.E."/>
            <person name="O'Brien K.P."/>
            <person name="Wilkinson P."/>
            <person name="Bodenteich A."/>
            <person name="Hartman K."/>
            <person name="Hu X."/>
            <person name="Khan A.S."/>
            <person name="Lane L."/>
            <person name="Tilahun Y."/>
            <person name="Wright H."/>
        </authorList>
    </citation>
    <scope>NUCLEOTIDE SEQUENCE [LARGE SCALE GENOMIC DNA]</scope>
</reference>
<reference key="5">
    <citation type="journal article" date="2004" name="Genome Res.">
        <title>The status, quality, and expansion of the NIH full-length cDNA project: the Mammalian Gene Collection (MGC).</title>
        <authorList>
            <consortium name="The MGC Project Team"/>
        </authorList>
    </citation>
    <scope>NUCLEOTIDE SEQUENCE [LARGE SCALE MRNA] (ISOFORM 1)</scope>
    <source>
        <tissue>Lung</tissue>
    </source>
</reference>
<reference key="6">
    <citation type="journal article" date="2005" name="Biochem. Biophys. Res. Commun.">
        <title>LARGE2 facilitates the maturation of alpha-dystroglycan more effectively than LARGE.</title>
        <authorList>
            <person name="Fujimura K."/>
            <person name="Sawaki H."/>
            <person name="Sakai T."/>
            <person name="Hiruma T."/>
            <person name="Nakanishi N."/>
            <person name="Sato T."/>
            <person name="Ohkura T."/>
            <person name="Narimatsu H."/>
        </authorList>
    </citation>
    <scope>FUNCTION</scope>
    <scope>TISSUE SPECIFICITY</scope>
</reference>
<reference key="7">
    <citation type="journal article" date="2005" name="Glycobiology">
        <title>Characterization of the LARGE family of putative glycosyltransferases associated with dystroglycanopathies.</title>
        <authorList>
            <person name="Grewal P.K."/>
            <person name="McLaughlan J.M."/>
            <person name="Moore C.J."/>
            <person name="Browning C.A."/>
            <person name="Hewitt J.E."/>
        </authorList>
    </citation>
    <scope>SUBCELLULAR LOCATION</scope>
</reference>
<reference key="8">
    <citation type="journal article" date="2005" name="Hum. Mol. Genet.">
        <title>Localization and functional analysis of the LARGE family of glycosyltransferases: significance for muscular dystrophy.</title>
        <authorList>
            <person name="Brockington M."/>
            <person name="Torelli S."/>
            <person name="Prandini P."/>
            <person name="Boito C."/>
            <person name="Dolatshad N.F."/>
            <person name="Longman C."/>
            <person name="Brown S.C."/>
            <person name="Muntoni F."/>
        </authorList>
    </citation>
    <scope>FUNCTION</scope>
    <scope>SUBCELLULAR LOCATION</scope>
    <scope>MUTAGENESIS OF 242-GLY--GLY-244; 334-GLY--GLY-336 AND 563-GLY--GLY-565</scope>
</reference>
<reference key="9">
    <citation type="journal article" date="2009" name="Proc. Natl. Acad. Sci. U.S.A.">
        <title>Tumor suppressor function of laminin-binding alpha-dystroglycan requires a distinct beta3-N-acetylglucosaminyltransferase.</title>
        <authorList>
            <person name="Bao X."/>
            <person name="Kobayashi M."/>
            <person name="Hatakeyama S."/>
            <person name="Angata K."/>
            <person name="Gullberg D."/>
            <person name="Nakayama J."/>
            <person name="Fukuda M.N."/>
            <person name="Fukuda M."/>
        </authorList>
    </citation>
    <scope>INTERACTION WITH B4GAT1</scope>
</reference>
<reference key="10">
    <citation type="journal article" date="2011" name="Proc. Natl. Acad. Sci. U.S.A.">
        <title>Like-acetylglucosaminyltransferase (LARGE)-dependent modification of dystroglycan at Thr-317/319 is required for laminin binding and arenavirus infection.</title>
        <authorList>
            <person name="Hara Y."/>
            <person name="Kanagawa M."/>
            <person name="Kunz S."/>
            <person name="Yoshida-Moriguchi T."/>
            <person name="Satz J.S."/>
            <person name="Kobayashi Y.M."/>
            <person name="Zhu Z."/>
            <person name="Burden S.J."/>
            <person name="Oldstone M.B."/>
            <person name="Campbell K.P."/>
        </authorList>
    </citation>
    <scope>FUNCTION</scope>
</reference>
<reference key="11">
    <citation type="journal article" date="2012" name="Science">
        <title>Dystroglycan function requires xylosyl- and glucuronyltransferase activities of LARGE.</title>
        <authorList>
            <person name="Inamori K."/>
            <person name="Yoshida-Moriguchi T."/>
            <person name="Hara Y."/>
            <person name="Anderson M.E."/>
            <person name="Yu L."/>
            <person name="Campbell K.P."/>
        </authorList>
    </citation>
    <scope>FUNCTION</scope>
    <scope>CATALYTIC ACTIVITY</scope>
    <scope>MUTAGENESIS OF 242-ASP--ASP-244 AND 563-ASP--ASP-565</scope>
</reference>
<reference key="12">
    <citation type="journal article" date="2013" name="Glycobiology">
        <title>Xylosyl- and glucuronyltransferase functions of LARGE in alpha-dystroglycan modification are conserved in LARGE2.</title>
        <authorList>
            <person name="Inamori K."/>
            <person name="Hara Y."/>
            <person name="Willer T."/>
            <person name="Anderson M.E."/>
            <person name="Zhu Z."/>
            <person name="Yoshida-Moriguchi T."/>
            <person name="Campbell K.P."/>
        </authorList>
    </citation>
    <scope>BIOPHYSICOCHEMICAL PROPERTIES</scope>
    <scope>CATALYTIC ACTIVITY</scope>
    <scope>FUNCTION</scope>
</reference>
<reference key="13">
    <citation type="journal article" date="2014" name="Elife">
        <title>The glucuronyltransferase B4GAT1 is required for initiation of LARGE-mediated alpha-dystroglycan functional glycosylation.</title>
        <authorList>
            <person name="Willer T."/>
            <person name="Inamori K.I."/>
            <person name="Venzke D."/>
            <person name="Harvey C."/>
            <person name="Morgensen G."/>
            <person name="Hara Y."/>
            <person name="Beltran Valero de Bernabe D."/>
            <person name="Yu L."/>
            <person name="Wright K.M."/>
            <person name="Campbell K.P."/>
        </authorList>
    </citation>
    <scope>FUNCTION</scope>
    <scope>CATALYTIC ACTIVITY</scope>
    <scope>SUBCELLULAR LOCATION</scope>
    <scope>PATHWAY</scope>
</reference>
<reference key="14">
    <citation type="journal article" date="2014" name="Elife">
        <title>B4GAT1 is the priming enzyme for the LARGE-dependent functional glycosylation of alpha-dystroglycan.</title>
        <authorList>
            <person name="Praissman J.L."/>
            <person name="Live D.H."/>
            <person name="Wang S."/>
            <person name="Ramiah A."/>
            <person name="Chinoy Z.S."/>
            <person name="Boons G.J."/>
            <person name="Moremen K.W."/>
            <person name="Wells L."/>
        </authorList>
    </citation>
    <scope>FUNCTION</scope>
    <scope>PATHWAY</scope>
    <scope>CATALYTIC ACTIVITY</scope>
</reference>
<reference key="15">
    <citation type="journal article" date="2014" name="J. Biol. Chem.">
        <title>Endogenous glucuronyltransferase activity of LARGE or LARGE2 required for functional modification of alpha-dystroglycan in cells and tissues.</title>
        <authorList>
            <person name="Inamori K."/>
            <person name="Willer T."/>
            <person name="Hara Y."/>
            <person name="Venzke D."/>
            <person name="Anderson M.E."/>
            <person name="Clarke N.F."/>
            <person name="Guicheney P."/>
            <person name="Bonnemann C.G."/>
            <person name="Moore S.A."/>
            <person name="Campbell K.P."/>
        </authorList>
    </citation>
    <scope>FUNCTION</scope>
    <scope>COFACTOR</scope>
    <scope>CATALYTIC ACTIVITY</scope>
</reference>
<reference key="16">
    <citation type="journal article" date="2020" name="Elife">
        <title>POMK regulates dystroglycan function via LARGE1-mediated elongation of matriglycan.</title>
        <authorList>
            <person name="Walimbe A.S."/>
            <person name="Okuma H."/>
            <person name="Joseph S."/>
            <person name="Yang T."/>
            <person name="Yonekawa T."/>
            <person name="Hord J.M."/>
            <person name="Venzke D."/>
            <person name="Anderson M.E."/>
            <person name="Torelli S."/>
            <person name="Manzur A."/>
            <person name="Devereaux M."/>
            <person name="Cuellar M."/>
            <person name="Prouty S."/>
            <person name="Ocampo Landa S."/>
            <person name="Yu L."/>
            <person name="Xiao J."/>
            <person name="Dixon J.E."/>
            <person name="Muntoni F."/>
            <person name="Campbell K.P."/>
        </authorList>
    </citation>
    <scope>FUNCTION</scope>
    <scope>CATALYTIC ACTIVITY</scope>
</reference>
<reference key="17">
    <citation type="journal article" date="2003" name="Hum. Mol. Genet.">
        <title>Mutations in the human LARGE gene cause MDC1D, a novel form of congenital muscular dystrophy with severe mental retardation and abnormal glycosylation of alpha-dystroglycan.</title>
        <authorList>
            <person name="Longman C."/>
            <person name="Brockington M."/>
            <person name="Torelli S."/>
            <person name="Jimenez-Mallebrera C."/>
            <person name="Kennedy C."/>
            <person name="Khalil N."/>
            <person name="Feng L."/>
            <person name="Saran R.K."/>
            <person name="Voit T."/>
            <person name="Merlini L."/>
            <person name="Sewry C.A."/>
            <person name="Brown S.C."/>
            <person name="Muntoni F."/>
        </authorList>
    </citation>
    <scope>VARIANT MDDGB6 LYS-509</scope>
</reference>
<reference key="18">
    <citation type="journal article" date="2008" name="Ann. Neurol.">
        <title>Brain involvement in muscular dystrophies with defective dystroglycan glycosylation.</title>
        <authorList>
            <person name="Clement E."/>
            <person name="Mercuri E."/>
            <person name="Godfrey C."/>
            <person name="Smith J."/>
            <person name="Robb S."/>
            <person name="Kinali M."/>
            <person name="Straub V."/>
            <person name="Bushby K."/>
            <person name="Manzur A."/>
            <person name="Talim B."/>
            <person name="Cowan F."/>
            <person name="Quinlivan R."/>
            <person name="Klein A."/>
            <person name="Longman C."/>
            <person name="McWilliam R."/>
            <person name="Topaloglu H."/>
            <person name="Mein R."/>
            <person name="Abbs S."/>
            <person name="North K."/>
            <person name="Barkovich A.J."/>
            <person name="Rutherford M."/>
            <person name="Muntoni F."/>
        </authorList>
    </citation>
    <scope>VARIANT MDDGA6 PHE-331</scope>
</reference>
<reference key="19">
    <citation type="journal article" date="2009" name="Neurology">
        <title>Congenital muscular dystrophies with defective glycosylation of dystroglycan: a population study.</title>
        <authorList>
            <person name="Mercuri E."/>
            <person name="Messina S."/>
            <person name="Bruno C."/>
            <person name="Mora M."/>
            <person name="Pegoraro E."/>
            <person name="Comi G.P."/>
            <person name="D'Amico A."/>
            <person name="Aiello C."/>
            <person name="Biancheri R."/>
            <person name="Berardinelli A."/>
            <person name="Boffi P."/>
            <person name="Cassandrini D."/>
            <person name="Laverda A."/>
            <person name="Moggio M."/>
            <person name="Morandi L."/>
            <person name="Moroni I."/>
            <person name="Pane M."/>
            <person name="Pezzani R."/>
            <person name="Pichiecchio A."/>
            <person name="Pini A."/>
            <person name="Minetti C."/>
            <person name="Mongini T."/>
            <person name="Mottarelli E."/>
            <person name="Ricci E."/>
            <person name="Ruggieri A."/>
            <person name="Saredi S."/>
            <person name="Scuderi C."/>
            <person name="Tessa A."/>
            <person name="Toscano A."/>
            <person name="Tortorella G."/>
            <person name="Trevisan C.P."/>
            <person name="Uggetti C."/>
            <person name="Vasco G."/>
            <person name="Santorelli F.M."/>
            <person name="Bertini E."/>
        </authorList>
    </citation>
    <scope>VARIANT MDDGA6 ARG-495</scope>
</reference>
<reference key="20">
    <citation type="journal article" date="2014" name="J. Neuropathol. Exp. Neurol.">
        <title>Clinical, pathologic, and mutational spectrum of dystroglycanopathy caused by LARGE mutations.</title>
        <authorList>
            <person name="Meilleur K.G."/>
            <person name="Zukosky K."/>
            <person name="Medne L."/>
            <person name="Fequiere P."/>
            <person name="Powell-Hamilton N."/>
            <person name="Winder T.L."/>
            <person name="Alsaman A."/>
            <person name="El-Hattab A.W."/>
            <person name="Dastgir J."/>
            <person name="Hu Y."/>
            <person name="Donkervoort S."/>
            <person name="Golden J.A."/>
            <person name="Eagle R."/>
            <person name="Finkel R."/>
            <person name="Scavina M."/>
            <person name="Hood I.C."/>
            <person name="Rorke-Adams L.B."/>
            <person name="Boennemann C.G."/>
        </authorList>
    </citation>
    <scope>VARIANT MDDGA6 TYR-443</scope>
</reference>
<sequence>MLGICRGRRKFLAASLSLLCIPAITWIYLFSGSFEDGKPVSLSPLESQAHSPRYTASSQRERESLEVRMREVEEENRALRRQLSLAQGRAPSHRRGNHSKTYSMEEGTGDSENLRAGIVAGNSSECGQQPVVEKCETIHVAIVCAGYNASRDVVTLVKSVLFHRRNPLHFHLIADSIAEQILATLFQTWMVPAVRVDFYNADELKSEVSWIPNKHYSGIYGLMKLVLTKTLPANLERVIVLDTDITFATDIAELWAVFHKFKGQQVLGLVENQSDWYLGNLWKNHRPWPALGRGYNTGVILLLLDKLRKMKWEQMWRLTAERELMGMLSTSLADQDIFNAVIKQNPFLVYQLPCFWNVQLSDHTRSEQCYRDVSDLKVIHWNSPKKLRVKNKHVEFFRNLYLTFLEYDGNLLRRELFGCPSEADVNSENLQKQLSELDEDDLCYEFRRERFTVHRTHLYFLHYEYEPAADSTDVTLVAQLSMDRLQMLEAICKHWEGPISLALYLSDAEAQQFLRYAQGSEVLMSRHNVGYHIVYKEGQFYPVNLLRNVAMKHISTPYMFLSDIDFLPMYGLYEYLRKSVIQLDLANTKKAMIVPAFETLRYRLSFPKSKAELLSMLDMGTLFTFRYHVWTKGHAPTNFAKWRTATTPYRVEWEADFEPYVVVRRDCPEYDRRFVGFGWNKVAHIMELDVQEYEFIVLPNAYMIHMPHAPSFDITKFRSNKQYRICLKTLKEEFQQDMSRRYGFAALKYLTAENNS</sequence>
<feature type="chain" id="PRO_0000206060" description="Xylosyl- and glucuronyltransferase LARGE1">
    <location>
        <begin position="1"/>
        <end position="756"/>
    </location>
</feature>
<feature type="topological domain" description="Cytoplasmic" evidence="2">
    <location>
        <begin position="1"/>
        <end position="10"/>
    </location>
</feature>
<feature type="transmembrane region" description="Helical; Signal-anchor for type II membrane protein" evidence="2">
    <location>
        <begin position="11"/>
        <end position="31"/>
    </location>
</feature>
<feature type="topological domain" description="Lumenal" evidence="2">
    <location>
        <begin position="32"/>
        <end position="756"/>
    </location>
</feature>
<feature type="region of interest" description="Disordered" evidence="3">
    <location>
        <begin position="43"/>
        <end position="69"/>
    </location>
</feature>
<feature type="region of interest" description="Disordered" evidence="3">
    <location>
        <begin position="81"/>
        <end position="109"/>
    </location>
</feature>
<feature type="region of interest" description="Xylosyltransferase activity" evidence="21">
    <location>
        <begin position="138"/>
        <end position="413"/>
    </location>
</feature>
<feature type="region of interest" description="Glucuronyltransferase activity" evidence="21">
    <location>
        <begin position="414"/>
        <end position="756"/>
    </location>
</feature>
<feature type="coiled-coil region" evidence="2">
    <location>
        <begin position="53"/>
        <end position="95"/>
    </location>
</feature>
<feature type="compositionally biased region" description="Polar residues" evidence="3">
    <location>
        <begin position="44"/>
        <end position="58"/>
    </location>
</feature>
<feature type="compositionally biased region" description="Basic and acidic residues" evidence="3">
    <location>
        <begin position="59"/>
        <end position="69"/>
    </location>
</feature>
<feature type="binding site" evidence="20 22">
    <location>
        <position position="242"/>
    </location>
    <ligand>
        <name>Mn(2+)</name>
        <dbReference type="ChEBI" id="CHEBI:29035"/>
        <label>1</label>
    </ligand>
</feature>
<feature type="binding site" evidence="20 22">
    <location>
        <position position="244"/>
    </location>
    <ligand>
        <name>Mn(2+)</name>
        <dbReference type="ChEBI" id="CHEBI:29035"/>
        <label>1</label>
    </ligand>
</feature>
<feature type="binding site" evidence="20 22">
    <location>
        <position position="563"/>
    </location>
    <ligand>
        <name>Mn(2+)</name>
        <dbReference type="ChEBI" id="CHEBI:29035"/>
        <label>2</label>
    </ligand>
</feature>
<feature type="binding site" evidence="20 22">
    <location>
        <position position="565"/>
    </location>
    <ligand>
        <name>Mn(2+)</name>
        <dbReference type="ChEBI" id="CHEBI:29035"/>
        <label>2</label>
    </ligand>
</feature>
<feature type="glycosylation site" description="N-linked (GlcNAc...) asparagine" evidence="2">
    <location>
        <position position="97"/>
    </location>
</feature>
<feature type="glycosylation site" description="N-linked (GlcNAc...) asparagine" evidence="2">
    <location>
        <position position="122"/>
    </location>
</feature>
<feature type="glycosylation site" description="N-linked (GlcNAc...) asparagine" evidence="2">
    <location>
        <position position="148"/>
    </location>
</feature>
<feature type="glycosylation site" description="N-linked (GlcNAc...) asparagine" evidence="2">
    <location>
        <position position="272"/>
    </location>
</feature>
<feature type="splice variant" id="VSP_014536" description="In isoform 2." evidence="19">
    <location>
        <begin position="378"/>
        <end position="429"/>
    </location>
</feature>
<feature type="sequence variant" id="VAR_013685" description="In dbSNP:rs470035.">
    <original>R</original>
    <variation>G</variation>
    <location>
        <position position="68"/>
    </location>
</feature>
<feature type="sequence variant" id="VAR_013686" description="In dbSNP:rs135311.">
    <original>R</original>
    <variation>P</variation>
    <location>
        <position position="68"/>
    </location>
</feature>
<feature type="sequence variant" id="VAR_065064" description="In MDDGA6; dbSNP:rs267607210." evidence="8">
    <original>S</original>
    <variation>F</variation>
    <location>
        <position position="331"/>
    </location>
</feature>
<feature type="sequence variant" id="VAR_075304" description="In MDDGA6." evidence="14">
    <original>C</original>
    <variation>Y</variation>
    <location>
        <position position="443"/>
    </location>
</feature>
<feature type="sequence variant" id="VAR_065065" description="In MDDGA6; dbSNP:rs267607209." evidence="9">
    <original>W</original>
    <variation>R</variation>
    <location>
        <position position="495"/>
    </location>
</feature>
<feature type="sequence variant" id="VAR_019811" description="In MDDGB6; dbSNP:rs121908675." evidence="4">
    <original>E</original>
    <variation>K</variation>
    <location>
        <position position="509"/>
    </location>
</feature>
<feature type="sequence variant" id="VAR_013687" description="In dbSNP:rs1046166.">
    <original>R</original>
    <variation>H</variation>
    <location>
        <position position="665"/>
    </location>
</feature>
<feature type="mutagenesis site" description="Loss of function, but does not abolish subcellular location." evidence="5">
    <original>DTD</original>
    <variation>NNN</variation>
    <location>
        <begin position="242"/>
        <end position="244"/>
    </location>
</feature>
<feature type="mutagenesis site" description="Glucuronyltransferase activity is present while xylosyltransferase activity is abolished." evidence="12">
    <original>DTD</original>
    <variation>NTN</variation>
    <location>
        <begin position="242"/>
        <end position="244"/>
    </location>
</feature>
<feature type="mutagenesis site" description="Loss of function, but does not abolish subcellular location." evidence="5">
    <original>DQD</original>
    <variation>NNN</variation>
    <location>
        <begin position="334"/>
        <end position="336"/>
    </location>
</feature>
<feature type="mutagenesis site" description="Xylosyltransferase activity is present while glucuronyltransferase activity is abolished." evidence="12">
    <original>DID</original>
    <variation>NIN</variation>
    <location>
        <begin position="563"/>
        <end position="565"/>
    </location>
</feature>
<feature type="mutagenesis site" description="Loss of function and abolishes subcellular location." evidence="5">
    <original>DID</original>
    <variation>NNN</variation>
    <location>
        <begin position="563"/>
        <end position="565"/>
    </location>
</feature>
<feature type="strand" evidence="28">
    <location>
        <begin position="138"/>
        <end position="144"/>
    </location>
</feature>
<feature type="helix" evidence="28">
    <location>
        <begin position="147"/>
        <end position="163"/>
    </location>
</feature>
<feature type="strand" evidence="28">
    <location>
        <begin position="168"/>
        <end position="174"/>
    </location>
</feature>
<feature type="helix" evidence="28">
    <location>
        <begin position="176"/>
        <end position="189"/>
    </location>
</feature>
<feature type="strand" evidence="28">
    <location>
        <begin position="194"/>
        <end position="201"/>
    </location>
</feature>
<feature type="helix" evidence="28">
    <location>
        <begin position="202"/>
        <end position="207"/>
    </location>
</feature>
<feature type="turn" evidence="28">
    <location>
        <begin position="208"/>
        <end position="210"/>
    </location>
</feature>
<feature type="strand" evidence="28">
    <location>
        <begin position="213"/>
        <end position="215"/>
    </location>
</feature>
<feature type="helix" evidence="28">
    <location>
        <begin position="218"/>
        <end position="222"/>
    </location>
</feature>
<feature type="helix" evidence="28">
    <location>
        <begin position="223"/>
        <end position="226"/>
    </location>
</feature>
<feature type="helix" evidence="28">
    <location>
        <begin position="227"/>
        <end position="230"/>
    </location>
</feature>
<feature type="strand" evidence="28">
    <location>
        <begin position="237"/>
        <end position="241"/>
    </location>
</feature>
<feature type="strand" evidence="28">
    <location>
        <begin position="245"/>
        <end position="247"/>
    </location>
</feature>
<feature type="helix" evidence="28">
    <location>
        <begin position="251"/>
        <end position="257"/>
    </location>
</feature>
<feature type="helix" evidence="28">
    <location>
        <begin position="258"/>
        <end position="260"/>
    </location>
</feature>
<feature type="strand" evidence="28">
    <location>
        <begin position="267"/>
        <end position="271"/>
    </location>
</feature>
<feature type="strand" evidence="27">
    <location>
        <begin position="273"/>
        <end position="275"/>
    </location>
</feature>
<feature type="helix" evidence="28">
    <location>
        <begin position="276"/>
        <end position="278"/>
    </location>
</feature>
<feature type="strand" evidence="27">
    <location>
        <begin position="281"/>
        <end position="284"/>
    </location>
</feature>
<feature type="strand" evidence="28">
    <location>
        <begin position="295"/>
        <end position="303"/>
    </location>
</feature>
<feature type="helix" evidence="28">
    <location>
        <begin position="304"/>
        <end position="309"/>
    </location>
</feature>
<feature type="helix" evidence="28">
    <location>
        <begin position="312"/>
        <end position="326"/>
    </location>
</feature>
<feature type="strand" evidence="28">
    <location>
        <begin position="327"/>
        <end position="332"/>
    </location>
</feature>
<feature type="helix" evidence="28">
    <location>
        <begin position="334"/>
        <end position="344"/>
    </location>
</feature>
<feature type="helix" evidence="28">
    <location>
        <begin position="346"/>
        <end position="348"/>
    </location>
</feature>
<feature type="strand" evidence="28">
    <location>
        <begin position="349"/>
        <end position="352"/>
    </location>
</feature>
<feature type="helix" evidence="28">
    <location>
        <begin position="354"/>
        <end position="356"/>
    </location>
</feature>
<feature type="strand" evidence="28">
    <location>
        <begin position="357"/>
        <end position="359"/>
    </location>
</feature>
<feature type="helix" evidence="27">
    <location>
        <begin position="366"/>
        <end position="369"/>
    </location>
</feature>
<feature type="strand" evidence="28">
    <location>
        <begin position="378"/>
        <end position="380"/>
    </location>
</feature>
<feature type="helix" evidence="27">
    <location>
        <begin position="386"/>
        <end position="388"/>
    </location>
</feature>
<feature type="helix" evidence="28">
    <location>
        <begin position="394"/>
        <end position="405"/>
    </location>
</feature>
<feature type="helix" evidence="28">
    <location>
        <begin position="409"/>
        <end position="413"/>
    </location>
</feature>
<feature type="strand" evidence="28">
    <location>
        <begin position="417"/>
        <end position="419"/>
    </location>
</feature>
<feature type="helix" evidence="28">
    <location>
        <begin position="426"/>
        <end position="436"/>
    </location>
</feature>
<feature type="helix" evidence="28">
    <location>
        <begin position="444"/>
        <end position="450"/>
    </location>
</feature>
<feature type="strand" evidence="27">
    <location>
        <begin position="456"/>
        <end position="458"/>
    </location>
</feature>
<feature type="strand" evidence="28">
    <location>
        <begin position="474"/>
        <end position="481"/>
    </location>
</feature>
<feature type="helix" evidence="28">
    <location>
        <begin position="482"/>
        <end position="486"/>
    </location>
</feature>
<feature type="helix" evidence="28">
    <location>
        <begin position="487"/>
        <end position="494"/>
    </location>
</feature>
<feature type="strand" evidence="28">
    <location>
        <begin position="499"/>
        <end position="505"/>
    </location>
</feature>
<feature type="helix" evidence="28">
    <location>
        <begin position="507"/>
        <end position="518"/>
    </location>
</feature>
<feature type="helix" evidence="28">
    <location>
        <begin position="521"/>
        <end position="525"/>
    </location>
</feature>
<feature type="strand" evidence="28">
    <location>
        <begin position="528"/>
        <end position="535"/>
    </location>
</feature>
<feature type="strand" evidence="28">
    <location>
        <begin position="538"/>
        <end position="540"/>
    </location>
</feature>
<feature type="helix" evidence="28">
    <location>
        <begin position="543"/>
        <end position="552"/>
    </location>
</feature>
<feature type="strand" evidence="28">
    <location>
        <begin position="555"/>
        <end position="561"/>
    </location>
</feature>
<feature type="strand" evidence="28">
    <location>
        <begin position="566"/>
        <end position="568"/>
    </location>
</feature>
<feature type="helix" evidence="28">
    <location>
        <begin position="572"/>
        <end position="582"/>
    </location>
</feature>
<feature type="turn" evidence="28">
    <location>
        <begin position="583"/>
        <end position="587"/>
    </location>
</feature>
<feature type="strand" evidence="28">
    <location>
        <begin position="590"/>
        <end position="593"/>
    </location>
</feature>
<feature type="strand" evidence="28">
    <location>
        <begin position="596"/>
        <end position="599"/>
    </location>
</feature>
<feature type="helix" evidence="28">
    <location>
        <begin position="610"/>
        <end position="618"/>
    </location>
</feature>
<feature type="strand" evidence="28">
    <location>
        <begin position="621"/>
        <end position="624"/>
    </location>
</feature>
<feature type="turn" evidence="28">
    <location>
        <begin position="626"/>
        <end position="629"/>
    </location>
</feature>
<feature type="turn" evidence="28">
    <location>
        <begin position="632"/>
        <end position="634"/>
    </location>
</feature>
<feature type="helix" evidence="27">
    <location>
        <begin position="635"/>
        <end position="637"/>
    </location>
</feature>
<feature type="helix" evidence="28">
    <location>
        <begin position="639"/>
        <end position="644"/>
    </location>
</feature>
<feature type="strand" evidence="28">
    <location>
        <begin position="649"/>
        <end position="651"/>
    </location>
</feature>
<feature type="strand" evidence="28">
    <location>
        <begin position="661"/>
        <end position="664"/>
    </location>
</feature>
<feature type="strand" evidence="28">
    <location>
        <begin position="676"/>
        <end position="679"/>
    </location>
</feature>
<feature type="helix" evidence="28">
    <location>
        <begin position="680"/>
        <end position="690"/>
    </location>
</feature>
<feature type="strand" evidence="28">
    <location>
        <begin position="694"/>
        <end position="697"/>
    </location>
</feature>
<feature type="strand" evidence="28">
    <location>
        <begin position="703"/>
        <end position="705"/>
    </location>
</feature>
<feature type="helix" evidence="28">
    <location>
        <begin position="713"/>
        <end position="716"/>
    </location>
</feature>
<feature type="helix" evidence="28">
    <location>
        <begin position="721"/>
        <end position="741"/>
    </location>
</feature>
<feature type="helix" evidence="28">
    <location>
        <begin position="744"/>
        <end position="750"/>
    </location>
</feature>
<evidence type="ECO:0000250" key="1">
    <source>
        <dbReference type="UniProtKB" id="Q9Z1M7"/>
    </source>
</evidence>
<evidence type="ECO:0000255" key="2"/>
<evidence type="ECO:0000256" key="3">
    <source>
        <dbReference type="SAM" id="MobiDB-lite"/>
    </source>
</evidence>
<evidence type="ECO:0000269" key="4">
    <source>
    </source>
</evidence>
<evidence type="ECO:0000269" key="5">
    <source>
    </source>
</evidence>
<evidence type="ECO:0000269" key="6">
    <source>
    </source>
</evidence>
<evidence type="ECO:0000269" key="7">
    <source>
    </source>
</evidence>
<evidence type="ECO:0000269" key="8">
    <source>
    </source>
</evidence>
<evidence type="ECO:0000269" key="9">
    <source>
    </source>
</evidence>
<evidence type="ECO:0000269" key="10">
    <source>
    </source>
</evidence>
<evidence type="ECO:0000269" key="11">
    <source>
    </source>
</evidence>
<evidence type="ECO:0000269" key="12">
    <source>
    </source>
</evidence>
<evidence type="ECO:0000269" key="13">
    <source>
    </source>
</evidence>
<evidence type="ECO:0000269" key="14">
    <source>
    </source>
</evidence>
<evidence type="ECO:0000269" key="15">
    <source>
    </source>
</evidence>
<evidence type="ECO:0000269" key="16">
    <source>
    </source>
</evidence>
<evidence type="ECO:0000269" key="17">
    <source>
    </source>
</evidence>
<evidence type="ECO:0000269" key="18">
    <source>
    </source>
</evidence>
<evidence type="ECO:0000303" key="19">
    <source>
    </source>
</evidence>
<evidence type="ECO:0000305" key="20"/>
<evidence type="ECO:0000305" key="21">
    <source>
    </source>
</evidence>
<evidence type="ECO:0000305" key="22">
    <source>
    </source>
</evidence>
<evidence type="ECO:0000305" key="23">
    <source>
    </source>
</evidence>
<evidence type="ECO:0000305" key="24">
    <source>
    </source>
</evidence>
<evidence type="ECO:0000305" key="25">
    <source>
    </source>
</evidence>
<evidence type="ECO:0000312" key="26">
    <source>
        <dbReference type="HGNC" id="HGNC:6511"/>
    </source>
</evidence>
<evidence type="ECO:0007829" key="27">
    <source>
        <dbReference type="PDB" id="7UI7"/>
    </source>
</evidence>
<evidence type="ECO:0007829" key="28">
    <source>
        <dbReference type="PDB" id="7ZVJ"/>
    </source>
</evidence>
<keyword id="KW-0002">3D-structure</keyword>
<keyword id="KW-0025">Alternative splicing</keyword>
<keyword id="KW-0175">Coiled coil</keyword>
<keyword id="KW-0912">Congenital muscular dystrophy</keyword>
<keyword id="KW-0225">Disease variant</keyword>
<keyword id="KW-1215">Dystroglycanopathy</keyword>
<keyword id="KW-0325">Glycoprotein</keyword>
<keyword id="KW-0328">Glycosyltransferase</keyword>
<keyword id="KW-0333">Golgi apparatus</keyword>
<keyword id="KW-0451">Lissencephaly</keyword>
<keyword id="KW-0464">Manganese</keyword>
<keyword id="KW-0472">Membrane</keyword>
<keyword id="KW-0479">Metal-binding</keyword>
<keyword id="KW-0511">Multifunctional enzyme</keyword>
<keyword id="KW-1267">Proteomics identification</keyword>
<keyword id="KW-1185">Reference proteome</keyword>
<keyword id="KW-0735">Signal-anchor</keyword>
<keyword id="KW-0808">Transferase</keyword>
<keyword id="KW-0812">Transmembrane</keyword>
<keyword id="KW-1133">Transmembrane helix</keyword>
<organism>
    <name type="scientific">Homo sapiens</name>
    <name type="common">Human</name>
    <dbReference type="NCBI Taxonomy" id="9606"/>
    <lineage>
        <taxon>Eukaryota</taxon>
        <taxon>Metazoa</taxon>
        <taxon>Chordata</taxon>
        <taxon>Craniata</taxon>
        <taxon>Vertebrata</taxon>
        <taxon>Euteleostomi</taxon>
        <taxon>Mammalia</taxon>
        <taxon>Eutheria</taxon>
        <taxon>Euarchontoglires</taxon>
        <taxon>Primates</taxon>
        <taxon>Haplorrhini</taxon>
        <taxon>Catarrhini</taxon>
        <taxon>Hominidae</taxon>
        <taxon>Homo</taxon>
    </lineage>
</organism>
<comment type="function">
    <text evidence="1 5 6 11 12 13 15 16 17 18">Bifunctional glycosyltransferase with both alpha-1,3-xylosyltransferase and beta-1,3-glucuronyltransferase activities involved in the maturation of alpha-dystroglycan (DAG1) by glycosylation leading to DAG1 binding to laminin G-like domain-containing extracellular proteins with high affinity (PubMed:15661757, PubMed:15752776, PubMed:21987822, PubMed:22223806, PubMed:23125099, PubMed:25279697, PubMed:25279699). Elongates the glucuronyl-beta-1,4-xylose-beta disaccharide primer structure initiated by B4GAT1 by adding repeating units [-3-Xylose-alpha-1,3-GlcA-beta-1-] to produce a heteropolysaccharide (PubMed:22223806, PubMed:23125099, PubMed:25138275, PubMed:25279697, PubMed:25279699, PubMed:32975514). Requires the phosphorylation of core M3 (O-mannosyl trisaccharide) by POMK to elongate the glucuronyl-beta-1,4-xylose-beta disaccharide primer (PubMed:21987822). Plays a key role in skeletal muscle function and regeneration (By similarity).</text>
</comment>
<comment type="catalytic activity">
    <reaction evidence="12 13 16 17">
        <text>3-O-[beta-D-GlcA-(1-&gt;3)-beta-D-Xyl-(1-&gt;4)-Rib-ol-P-Rib-ol-P-3-beta-D-GalNAc-(1-&gt;3)-beta-D-GlcNAc-(1-&gt;4)-(O-6-P-alpha-D-Man)]-Thr-[protein] + UDP-alpha-D-xylose = 3-O-[alpha-D-Xyl-(1-&gt;3)-beta-D-GlcA-(1-&gt;4)-beta-D-Xyl-(1-&gt;4)-Rib-ol-P-Rib-ol-P-3-beta-D-GalNAc-(1-&gt;3)-beta-D-GlcNAc-(1-&gt;4)-(O-6-P-alpha-D-Man)]-Thr-[protein] + UDP + H(+)</text>
        <dbReference type="Rhea" id="RHEA:57336"/>
        <dbReference type="Rhea" id="RHEA-COMP:17482"/>
        <dbReference type="Rhea" id="RHEA-COMP:17483"/>
        <dbReference type="ChEBI" id="CHEBI:15378"/>
        <dbReference type="ChEBI" id="CHEBI:57632"/>
        <dbReference type="ChEBI" id="CHEBI:58223"/>
        <dbReference type="ChEBI" id="CHEBI:177336"/>
        <dbReference type="ChEBI" id="CHEBI:177352"/>
    </reaction>
    <physiologicalReaction direction="left-to-right" evidence="21 23 24">
        <dbReference type="Rhea" id="RHEA:57337"/>
    </physiologicalReaction>
</comment>
<comment type="catalytic activity">
    <reaction evidence="12 13 15 16 17 18">
        <text>3-O-{(1-&gt;[3)-alpha-D-Xyl-(1-&gt;3)-beta-D-GlcA-(1-&gt;](n)-4)-beta-D-Xyl-(1-&gt;4)-Rib-ol-P-Rib-ol-P-3-beta-D-GalNAc-(1-&gt;3)-beta-D-GlcNAc-(1-&gt;4)-O-6-P-alpha-D-Man}-L-Thr-[protein] + UDP-alpha-D-glucuronate = 3-O-{beta-D-GlcA-(1-&gt;[3)-alpha-D-Xyl-(1-&gt;3)-beta-D-GlcA-(1-&gt;](n)-4)-beta-D-Xyl-(1-&gt;4)-Rib-ol-P-Rib-ol-P-3-beta-D-GalNAc-(1-&gt;3)-beta-D-GlcNAc-(1-&gt;4)-O-6-P-alpha-D-Man}-L-Thr-[protein] + UDP + H(+)</text>
        <dbReference type="Rhea" id="RHEA:67924"/>
        <dbReference type="Rhea" id="RHEA-COMP:17484"/>
        <dbReference type="Rhea" id="RHEA-COMP:17486"/>
        <dbReference type="ChEBI" id="CHEBI:15378"/>
        <dbReference type="ChEBI" id="CHEBI:58052"/>
        <dbReference type="ChEBI" id="CHEBI:58223"/>
        <dbReference type="ChEBI" id="CHEBI:177354"/>
        <dbReference type="ChEBI" id="CHEBI:177355"/>
    </reaction>
    <physiologicalReaction direction="left-to-right" evidence="21 22 23 24 25">
        <dbReference type="Rhea" id="RHEA:67925"/>
    </physiologicalReaction>
</comment>
<comment type="catalytic activity">
    <reaction evidence="12 16 17">
        <text>3-O-{beta-D-GlcA-(1-&gt;[3)-alpha-D-Xyl-(1-&gt;3)-beta-D-GlcA-(1-&gt;](n)-4)-beta-D-Xyl-(1-&gt;4)-Rib-ol-P-Rib-ol-P-3-beta-D-GalNAc-(1-&gt;3)-beta-D-GlcNAc-(1-&gt;4)-O-6-P-alpha-D-Man}-L-Thr-[protein] + UDP-alpha-D-xylose = 3-O-{(1-&gt;[3)-alpha-D-Xyl-(1-&gt;3)-beta-D-GlcA-(1-&gt;](n+1)-4)-beta-D-Xyl-(1-&gt;4)-Rib-ol-P-Rib-ol-P-3-beta-D-GalNAc-(1-&gt;3)-beta-D-GlcNAc-(1-&gt;4)-O-6-P-alpha-D-Man}-L-Thr-[protein] + UDP + H(+)</text>
        <dbReference type="Rhea" id="RHEA:68368"/>
        <dbReference type="Rhea" id="RHEA-COMP:17485"/>
        <dbReference type="Rhea" id="RHEA-COMP:17486"/>
        <dbReference type="ChEBI" id="CHEBI:15378"/>
        <dbReference type="ChEBI" id="CHEBI:57632"/>
        <dbReference type="ChEBI" id="CHEBI:58223"/>
        <dbReference type="ChEBI" id="CHEBI:177354"/>
        <dbReference type="ChEBI" id="CHEBI:177355"/>
    </reaction>
    <physiologicalReaction direction="left-to-right" evidence="21 23 24">
        <dbReference type="Rhea" id="RHEA:68369"/>
    </physiologicalReaction>
</comment>
<comment type="cofactor">
    <cofactor evidence="15">
        <name>Mn(2+)</name>
        <dbReference type="ChEBI" id="CHEBI:29035"/>
    </cofactor>
    <text evidence="15">Binds 2 Mn(2+) ions per subunit. The xylosyltransferase part binds one Mn(2+) and the beta-1,3-glucuronyltransferase part binds one Mn(2+).</text>
</comment>
<comment type="biophysicochemical properties">
    <phDependence>
        <text evidence="13">Optimum pH is 5 for xylosyltransferase activity. Optimum pH is from 5.5 to 8.0 for Beta-1,3-glucuronyltransferase activity.</text>
    </phDependence>
</comment>
<comment type="pathway">
    <text evidence="16 17">Protein modification; protein glycosylation.</text>
</comment>
<comment type="subunit">
    <text evidence="1 10">Interacts with DAG1 (via the N-terminal domain of alpha-DAG1); the interaction increases binding of DAG1 to laminin (By similarity). Interacts with B4GAT1 (PubMed:19587235).</text>
</comment>
<comment type="interaction">
    <interactant intactId="EBI-15792998">
        <id>O95461-1</id>
    </interactant>
    <interactant intactId="EBI-6138697">
        <id>O43505</id>
        <label>B4GAT1</label>
    </interactant>
    <organismsDiffer>false</organismsDiffer>
    <experiments>2</experiments>
</comment>
<comment type="subcellular location">
    <subcellularLocation>
        <location evidence="5 7 17">Golgi apparatus membrane</location>
        <topology evidence="5 7">Single-pass type II membrane protein</topology>
    </subcellularLocation>
</comment>
<comment type="alternative products">
    <event type="alternative splicing"/>
    <isoform>
        <id>O95461-1</id>
        <name>1</name>
        <sequence type="displayed"/>
    </isoform>
    <isoform>
        <id>O95461-2</id>
        <name>2</name>
        <sequence type="described" ref="VSP_014536"/>
    </isoform>
</comment>
<comment type="tissue specificity">
    <text evidence="6">Ubiquitous. Highest expression in heart, brain and skeletal muscle.</text>
</comment>
<comment type="disease" evidence="4">
    <disease id="DI-01410">
        <name>Muscular dystrophy-dystroglycanopathy congenital with impaired intellectual development B6</name>
        <acronym>MDDGB6</acronym>
        <description>A congenital muscular dystrophy associated with profound intellectual disability, white matter changes and structural brain abnormalities. Skeletal muscle biopsies show reduced immunolabeling of alpha-dystroglycan.</description>
        <dbReference type="MIM" id="608840"/>
    </disease>
    <text>The disease is caused by variants affecting the gene represented in this entry.</text>
</comment>
<comment type="disease" evidence="8 9 14">
    <disease id="DI-02962">
        <name>Muscular dystrophy-dystroglycanopathy congenital with brain and eye anomalies A6</name>
        <acronym>MDDGA6</acronym>
        <description>An autosomal recessive disorder characterized by congenital muscular dystrophy associated with cobblestone lissencephaly and other brain anomalies, eye malformations, profound intellectual disability, and death usually in the first years of life. Included diseases are the more severe Walker-Warburg syndrome and the slightly less severe muscle-eye-brain disease.</description>
        <dbReference type="MIM" id="613154"/>
    </disease>
    <text>The disease is caused by variants affecting the gene represented in this entry.</text>
</comment>
<comment type="similarity">
    <text evidence="20">In the C-terminal section; belongs to the glycosyltransferase 49 family.</text>
</comment>
<comment type="similarity">
    <text evidence="20">In the N-terminal section; belongs to the glycosyltransferase 8 family.</text>
</comment>
<comment type="sequence caution" evidence="20">
    <conflict type="erroneous initiation">
        <sequence resource="EMBL-CDS" id="BAA25535"/>
    </conflict>
    <text>Extended N-terminus.</text>
</comment>
<comment type="online information" name="Functional Glycomics Gateway - GTase">
    <link uri="http://www.functionalglycomics.org/glycomics/molecule/jsp/glycoEnzyme/viewGlycoEnzyme.jsp?gbpId=gt_hum_549"/>
    <text>Glycosyltransferase-like protein LARGE1</text>
</comment>
<name>LARG1_HUMAN</name>
<accession>O95461</accession>
<accession>B0QXZ7</accession>
<accession>O60348</accession>
<accession>Q17R80</accession>
<accession>Q9UGD1</accession>
<accession>Q9UGE7</accession>
<accession>Q9UGG3</accession>
<accession>Q9UGZ8</accession>
<accession>Q9UH22</accession>
<gene>
    <name evidence="26" type="primary">LARGE1</name>
    <name type="synonym">KIAA0609</name>
    <name type="synonym">LARGE</name>
</gene>